<gene>
    <name type="primary">DDX3X</name>
    <name evidence="58" type="synonym">DBX</name>
    <name type="synonym">DDX3</name>
</gene>
<comment type="function">
    <text evidence="1 10 12 13 14 15 16 17 18 20 21 23 24 27 28 29 30 31 33 34 35 36 42 43 44 46 47 48 51 52 54 55 59">Multifunctional ATP-dependent RNA helicase (PubMed:17357160, PubMed:21589879, PubMed:31575075). The ATPase activity can be stimulated by various ribo-and deoxynucleic acids indicative for a relaxed substrate specificity (PubMed:29222110). In vitro can unwind partially double-stranded DNA with a preference for 5'-single-stranded DNA overhangs (PubMed:17357160, PubMed:21589879). Binds RNA G-quadruplex (rG4s) structures, including those located in the 5'-UTR of NRAS mRNA (PubMed:30256975). Involved in many cellular processes, which do not necessarily require its ATPase/helicase catalytic activities (Probable). Involved in transcription regulation (PubMed:16818630, PubMed:18264132). Positively regulates CDKN1A/WAF1/CIP1 transcription in an SP1-dependent manner, hence inhibits cell growth. This function requires its ATPase, but not helicase activity (PubMed:16818630, PubMed:18264132). CDKN1A up-regulation may be cell-type specific (PubMed:18264132). Binds CDH1/E-cadherin promoter and represses its transcription (PubMed:18264132). Potentiates HNF4A-mediated MTTP transcriptional activation; this function requires ATPase, but not helicase activity. Facilitates HNF4A acetylation, possibly catalyzed by CREBBP/EP300, thereby increasing the DNA-binding affinity of HNF4 to its response element. In addition, disrupts the interaction between HNF4 and SHP that forms inactive heterodimers and enhances the formation of active HNF4 homodimers. By promoting HNF4A-induced MTTP expression, may play a role in lipid homeostasis (PubMed:28128295). May positively regulate TP53 transcription (PubMed:28842590). Associates with mRNPs, predominantly with spliced mRNAs carrying an exon junction complex (EJC) (PubMed:17095540, PubMed:18596238). Involved in the regulation of translation initiation (PubMed:17667941, PubMed:18628297, PubMed:22872150). Not involved in the general process of translation, but promotes efficient translation of selected complex mRNAs, containing highly structured 5'-untranslated regions (UTR) (PubMed:20837705, PubMed:22872150). This function depends on helicase activity (PubMed:20837705, PubMed:22872150). Might facilitate translation by resolving secondary structures of 5'-UTRs during ribosome scanning (PubMed:20837705). Alternatively, may act prior to 43S ribosomal scanning and promote 43S pre-initiation complex entry to mRNAs exhibiting specific RNA motifs, by performing local remodeling of transcript structures located close to the cap moiety (PubMed:22872150). Independently of its ATPase activity, promotes the assembly of functional 80S ribosomes and disassembles from ribosomes prior to the translation elongation process (PubMed:22323517). Positively regulates the translation of cyclin E1/CCNE1 mRNA and consequently promotes G1/S-phase transition during the cell cycle (PubMed:20837705). May activate TP53 translation (PubMed:28842590). Required for endoplasmic reticulum stress-induced ATF4 mRNA translation (PubMed:29062139). Independently of its ATPase/helicase activity, enhances IRES-mediated translation; this activity requires interaction with EIF4E (PubMed:17667941, PubMed:22323517). Independently of its ATPase/helicase activity, has also been shown specifically repress cap-dependent translation, possibly by acting on translation initiation factor EIF4E (PubMed:17667941). Involved in innate immunity, acting as a viral RNA sensor. Binds viral RNAs and promotes the production of type I interferon (IFN-alpha and IFN-beta) (PubMed:20127681, PubMed:21170385, PubMed:31575075). Potentiate MAVS/RIGI-mediated induction of IFNB in early stages of infection (PubMed:20127681, PubMed:21170385, PubMed:33674311). Enhances IFNB1 expression via IRF3/IRF7 pathway and participates in NFKB activation in the presence of MAVS and TBK1 (PubMed:18583960, PubMed:18636090, PubMed:19913487, PubMed:21170385, PubMed:27980081). Involved in TBK1 and IKBKE-dependent IRF3 activation leading to IFNB induction, acts as a scaffolding adapter that links IKBKE and IRF3 and coordinates their activation (PubMed:23478265). Involved in the TLR7/TLR8 signaling pathway leading to type I interferon induction, including IFNA4 production. In this context, acts as an upstream regulator of IRF7 activation by MAP3K14/NIK and CHUK/IKKA. Stimulates CHUK autophosphorylation and activation following physiological activation of the TLR7 and TLR8 pathways, leading to MAP3K14/CHUK-mediated activatory phosphorylation of IRF7 (PubMed:30341167). Also stimulates MAP3K14/CHUK-dependent NF-kappa-B signaling (PubMed:30341167). Negatively regulates TNF-induced IL6 and IL8 expression, via the NF-kappa-B pathway. May act by interacting with RELA/p65 and trapping it in the cytoplasm (PubMed:27736973). May also bind IFNB promoter; the function is independent of IRF3 (PubMed:18583960). Involved in both stress and inflammatory responses (By similarity). Independently of its ATPase/helicase activity, required for efficient stress granule assembly through its interaction with EIF4E, hence promotes survival in stressed cells (PubMed:21883093). Independently of its helicase activity, regulates NLRP3 inflammasome assembly through interaction with NLRP3 and hence promotes cell death by pyroptosis during inflammation. This function is independent of helicase activity (By similarity). Therefore DDX3X availability may be used to interpret stress signals and choose between pro-survival stress granules and pyroptotic NLRP3 inflammasomes and serve as a live-or-die checkpoint in stressed cells (By similarity). In association with GSK3A/B, negatively regulates extrinsic apoptotic signaling pathway via death domain receptors, including TNFRSF10B, slowing down the rate of CASP3 activation following death receptor stimulation (PubMed:18846110). Cleavage by caspases may inactivate DDX3X and relieve the inhibition (PubMed:18846110). Independently of its ATPase/helicase activity, allosteric activator of CSNK1E. Stimulates CSNK1E-mediated phosphorylation of DVL2, thereby involved in the positive regulation of Wnt/beta-catenin signaling pathway. Also activates CSNK1A1 and CSNK1D in vitro, but it is uncertain if these targets are physiologically relevant (PubMed:23413191, PubMed:29222110). ATPase and casein kinase-activating functions are mutually exclusive (PubMed:29222110). May be involved in mitotic chromosome segregation (PubMed:21730191).</text>
</comment>
<comment type="function">
    <text evidence="28 49">(Microbial infection) Facilitates hepatitis C virus (HCV) replication (PubMed:29899501). During infection, HCV core protein inhibits the interaction between MAVS and DDX3X and therefore impairs MAVS-dependent INFB induction and might recruit DDX3X to HCV replication complex (PubMed:21170385).</text>
</comment>
<comment type="function">
    <text evidence="8 16 29 34 49">(Microbial infection) Facilitates HIV-1 replication (PubMed:15507209, PubMed:18583960, PubMed:21589879, PubMed:22872150, PubMed:29899501). Acts as a cofactor for XPO1-mediated nuclear export of HIV-1 Rev RNAs (PubMed:15507209, PubMed:18583960, PubMed:29899501). This function is strongly stimulated in the presence of TBK1 and requires DDX3X ATPase activity (PubMed:18583960).</text>
</comment>
<comment type="function">
    <text evidence="49">(Microbial infection) Facilitates Zika virus (ZIKV) replication.</text>
</comment>
<comment type="function">
    <text evidence="49">(Microbial infection) Facilitates Dengue virus (DENV) replication.</text>
</comment>
<comment type="function">
    <text evidence="40">(Microbial infection) Facilitates Venezuelan equine encephalitis virus (VEEV) replication.</text>
</comment>
<comment type="catalytic activity">
    <reaction evidence="8 13 29 53 54">
        <text>ATP + H2O = ADP + phosphate + H(+)</text>
        <dbReference type="Rhea" id="RHEA:13065"/>
        <dbReference type="ChEBI" id="CHEBI:15377"/>
        <dbReference type="ChEBI" id="CHEBI:15378"/>
        <dbReference type="ChEBI" id="CHEBI:30616"/>
        <dbReference type="ChEBI" id="CHEBI:43474"/>
        <dbReference type="ChEBI" id="CHEBI:456216"/>
        <dbReference type="EC" id="3.6.4.13"/>
    </reaction>
</comment>
<comment type="biophysicochemical properties">
    <kinetics>
        <KM evidence="13">0.04 mM for ATP (in the absence of nucleic acid)</KM>
        <KM evidence="13">0.03 mM for ATP (in the presence of ssDNA oligonucleoside dA200)</KM>
        <KM evidence="29">0.062 mM for ATP (in the absence of nucleic acid)</KM>
        <KM evidence="29">0.045 mM for ATP (in the presence of RNA oligo(rU)20)</KM>
        <KM evidence="29">0.047 mM for ATP (in the presence of DNA oligo(dT)20)</KM>
        <text evidence="13 29">kcat is 14 min(-1) for ATP hydrolysis in the absence of nucleic acid (PubMed:17357160). kcat is 36 min(-1) for ATP hydrolysis in the presence of ssDNA oligonucleoside dA200 (PubMed:17357160). kcat is 1.6 min(-1) for ATP hydrolysis in the absence of nucleic acid (PubMed:21589879). kcat is 3.2 min(-1) for ATP hydrolysis in the presence of RNA oligo(rU)20 (PubMed:21589879). kcat is 3.8 min(-1) for ATP hydrolysis in the presence of DNA oligo(dT)20 (PubMed:21589879).</text>
    </kinetics>
</comment>
<comment type="subunit">
    <text evidence="1 8 10 14 17 18 19 20 21 22 24 25 26 28 30 31 32 33 34 35 36 37 38 41 42 43 44 45 46 48 49 50 52 53 54 60 61 62 63 64">Homodimer; can bind RNA as a monomer and as a dimer/oligomer (PubMed:27546789, PubMed:31300642). Interacts with TDRD3 (PubMed:18632687). Interacts (when phosphorylated at Ser-102) with IRF3; the interaction facilitates the phosphorylation and activation of IRF3 by IKBKE (PubMed:23478265, PubMed:27980081). Directly interacts with XPO1/CRM1 (PubMed:15507209, PubMed:30131165, PubMed:31575075). The interaction with XPO1/CMR1 is dependent on the DDX3X nuclear export signal motif and XPO1 interaction with GTPase RAN in its active GTP-bound form (PubMed:30131165, PubMed:31575075). Weakly interacts with TBKBP1/SINTBAD (PubMed:27980081). Directly interacts with TRAF3; this interaction stimulates TRAF3 'Lys-63' ubiquitination (PubMed:27980081). Interacts with CSNK1E in a Wnt-dependent manner; this interaction greatly enhances CSNK1E affinity for ATP, stimulates its kinase activity and promotes CSNK1E-mediated DVL2 phosphorylation (PubMed:23413191, PubMed:29222110). In the presence of RNA, the interaction is decreased (PubMed:29222110). Also interacts with CSNK1D and stimulates its kinase activity (PubMed:23413191, PubMed:29222110). Interacts with TRPV4; this interaction is decreased when the TRPV4 channel is activated, leading to DDX3X relocalization to the nucleus (PubMed:29899501). Interacts with MAP3K14/NIK (PubMed:30341167). Directly interacts with CHUK/IKKA after physiological activation of the TLR7 and TLR8 pathways; this interaction enhances CHUK autophosphorylation (PubMed:30341167). May associate with EIF4F complex, composed of at least EIF4A, EIF4E and EIF4G1/EIF4G3 (Probable). Directly interacts with EIF4E in an RNA-independent manner; this interaction enhances EIF4E cap-binding ability (PubMed:17667941, PubMed:21883093, PubMed:28733330). Directly interacts with EIF4G1 in an RNA-independent manner (PubMed:22872150). DDX3X competes with EIF4G1 for interaction with EIF4E (PubMed:17667941, PubMed:21883093). Interacts with EIF4A1 and EIF2S1 in an RNA-independent manner (PubMed:18596238, PubMed:22323517). Associates with the eukaryotic translation initiation factor 3 (eIF-3) complex, including with EIF3B and EIF3C subunits (PubMed:18628297, PubMed:22323517). Directly interacts with IKBKE/IKKE; this interaction stimulates IKBKE activating autophosphorylation and is induced upon viral infection (PubMed:18636090, PubMed:20657822, PubMed:23478265, PubMed:27980081). Interacts with TBK1 (PubMed:20375222). Interacts with SP1; this interaction potentiates SP1-induced CDKN1A/WAF1/CIP1 transcription (PubMed:16818630). Interacts with GSK3A and GSK3B (PubMed:18846110). Interacts with several death receptors, inclusing FAS, TNFRSF10A and TNFRSF10B (PubMed:18846110). Recruited to TNFRSF10B in the absence of receptor stimulation. When TNFRSF10B is stimulated, further recruited to the receptor and cleaved by caspases. A large proteolytic fragment remains associated with TNFRSF10B (PubMed:18846110). Interacts (via C-terminus) with NXF1/TAP; this interaction may be partly involved in DDX3X nuclear export and in NXF1 localization to stress granules (PubMed:18596238). Identified in an mRNP complex, composed of at least DHX9, DDX3X, ELAVL1, HNRNPU, IGF2BP1/2, ILF3, PABPC1, PCBP2, PTBP2, STAU1, STAU2, SYNCRIP and YBX1 (PubMed:19029303). The interaction with IGF2BP1/2 is RNA-dependent (PubMed:22323517). Directly interacts with PABPC1/PABP1 in an RNA-independent manner (PubMed:18596238, PubMed:21883093, PubMed:22872150, PubMed:28733330). This interaction increases in stressed cells and decreases during cell recovery (PubMed:21883093). Interacts (via C-terminus) with MAVS/IPS-1; this interaction occurs rapidly, but transiently after Sendai virus infection (PubMed:20127681, PubMed:21170385, PubMed:27980081). The interaction potentiates MAVS-mediated IFNB induction (PubMed:20127681, PubMed:21170385). Interacts with ERCC6/CBS (PubMed:26030138). Interacts with DHX33 in an RNA-independent manner (PubMed:26100019). Interacts with DDX5 in the cytoplasm; this interaction may be more efficient when both proteins are unphosphorylated (PubMed:22034099). Interacts with RIGI/RIG-1 (PubMed:20127681). Interacts with IFIH1/MDA5 (PubMed:20127681). Interacts with NCAPH; this interaction may be important for the NCAPH localization at condensing chromosomes during mitosis (PubMed:21730191). Interacts with NLRP3 (via NACHT domain) under inflammasome-activating conditions (By similarity). Interacts with CAPRIN1 (PubMed:28733330). Interacts with HNF4A and NR0B2/SHP in an RNA-independent manner; this interaction disrupts the interaction between HNF4 and NR0B2 that forms inactive heterodimers and enhances the formation of active HNF4 homodimers (PubMed:28128295). Interacts with CREBBP/CBP (PubMed:28128295). Interacts with EP300/p300 (PubMed:28128295). Interacts with gamma-tubulin (PubMed:28842590). Interacts with phosphorylated TP53 (PubMed:28842590). Directly interacts with RELA/p65; this interaction may trap RELA in the cytoplasm, impairing nuclear relocalization upon TNF activating signals (PubMed:27736973).</text>
</comment>
<comment type="subunit">
    <text evidence="25 26">(Microbial infection) Interacts with hepatitis B virus (HBV) polymerase in the cytoplasm; this interaction may inhibit DDX3X interaction with the IKBKE/TBK1 complex, and hence impair IKBKE/TBK1-mediated increase in IFNB production.</text>
</comment>
<comment type="subunit">
    <text evidence="5">(Microbial infection) Directly interacts with hepatitis C virus (HCV) core protein in the cytoplasm.</text>
</comment>
<comment type="subunit">
    <text evidence="20 23">(Microbial infection) Interacts with vaccinia virus (VACV) protein K7.</text>
</comment>
<comment type="subunit">
    <text evidence="8">(Microbial infection) Interacts with HIV-1 protein Rev.</text>
</comment>
<comment type="subunit">
    <text evidence="40">(Microbial infection) Interacts with Venezuelan equine encephalitis virus non-structural protein 3.</text>
</comment>
<comment type="interaction">
    <interactant intactId="EBI-353779">
        <id>O00571</id>
    </interactant>
    <interactant intactId="EBI-10275670">
        <id>Q8TF63</id>
        <label>DCANP1</label>
    </interactant>
    <organismsDiffer>false</organismsDiffer>
    <experiments>3</experiments>
</comment>
<comment type="interaction">
    <interactant intactId="EBI-353779">
        <id>O00571</id>
    </interactant>
    <interactant intactId="EBI-1056162">
        <id>P05198</id>
        <label>EIF2S1</label>
    </interactant>
    <organismsDiffer>false</organismsDiffer>
    <experiments>3</experiments>
</comment>
<comment type="interaction">
    <interactant intactId="EBI-353779">
        <id>O00571</id>
    </interactant>
    <interactant intactId="EBI-366696">
        <id>P55884</id>
        <label>EIF3B</label>
    </interactant>
    <organismsDiffer>false</organismsDiffer>
    <experiments>5</experiments>
</comment>
<comment type="interaction">
    <interactant intactId="EBI-353779">
        <id>O00571</id>
    </interactant>
    <interactant intactId="EBI-353741">
        <id>Q99613</id>
        <label>EIF3C</label>
    </interactant>
    <organismsDiffer>false</organismsDiffer>
    <experiments>3</experiments>
</comment>
<comment type="interaction">
    <interactant intactId="EBI-353779">
        <id>O00571</id>
    </interactant>
    <interactant intactId="EBI-73711">
        <id>Q04637</id>
        <label>EIF4G1</label>
    </interactant>
    <organismsDiffer>false</organismsDiffer>
    <experiments>3</experiments>
</comment>
<comment type="interaction">
    <interactant intactId="EBI-353779">
        <id>O00571</id>
    </interactant>
    <interactant intactId="EBI-307369">
        <id>Q14164</id>
        <label>IKBKE</label>
    </interactant>
    <organismsDiffer>false</organismsDiffer>
    <experiments>4</experiments>
</comment>
<comment type="interaction">
    <interactant intactId="EBI-353779">
        <id>O00571</id>
    </interactant>
    <interactant intactId="EBI-995373">
        <id>Q7Z434</id>
        <label>MAVS</label>
    </interactant>
    <organismsDiffer>false</organismsDiffer>
    <experiments>4</experiments>
</comment>
<comment type="interaction">
    <interactant intactId="EBI-353779">
        <id>O00571</id>
    </interactant>
    <interactant intactId="EBI-2558548">
        <id>Q6P582</id>
        <label>MZT2A</label>
    </interactant>
    <organismsDiffer>false</organismsDiffer>
    <experiments>3</experiments>
</comment>
<comment type="interaction">
    <interactant intactId="EBI-353779">
        <id>O00571</id>
    </interactant>
    <interactant intactId="EBI-1046410">
        <id>Q15003</id>
        <label>NCAPH</label>
    </interactant>
    <organismsDiffer>false</organismsDiffer>
    <experiments>2</experiments>
</comment>
<comment type="interaction">
    <interactant intactId="EBI-353779">
        <id>O00571</id>
    </interactant>
    <interactant intactId="EBI-398874">
        <id>Q9UBU9</id>
        <label>NXF1</label>
    </interactant>
    <organismsDiffer>false</organismsDiffer>
    <experiments>5</experiments>
</comment>
<comment type="interaction">
    <interactant intactId="EBI-353779">
        <id>O00571</id>
    </interactant>
    <interactant intactId="EBI-81531">
        <id>P11940</id>
        <label>PABPC1</label>
    </interactant>
    <organismsDiffer>false</organismsDiffer>
    <experiments>10</experiments>
</comment>
<comment type="interaction">
    <interactant intactId="EBI-353779">
        <id>O00571</id>
    </interactant>
    <interactant intactId="EBI-995350">
        <id>O95786</id>
        <label>RIGI</label>
    </interactant>
    <organismsDiffer>false</organismsDiffer>
    <experiments>2</experiments>
</comment>
<comment type="interaction">
    <interactant intactId="EBI-353779">
        <id>O00571</id>
    </interactant>
    <interactant intactId="EBI-372899">
        <id>Q13148</id>
        <label>TARDBP</label>
    </interactant>
    <organismsDiffer>false</organismsDiffer>
    <experiments>6</experiments>
</comment>
<comment type="interaction">
    <interactant intactId="EBI-353779">
        <id>O00571</id>
    </interactant>
    <interactant intactId="EBI-4314702">
        <id>Q03403</id>
        <label>TFF2</label>
    </interactant>
    <organismsDiffer>false</organismsDiffer>
    <experiments>3</experiments>
</comment>
<comment type="interaction">
    <interactant intactId="EBI-353779">
        <id>O00571</id>
    </interactant>
    <interactant intactId="EBI-26968662">
        <id>P14240</id>
        <label>L</label>
    </interactant>
    <organismsDiffer>true</organismsDiffer>
    <experiments>2</experiments>
</comment>
<comment type="interaction">
    <interactant intactId="EBI-353779">
        <id>O00571</id>
    </interactant>
    <interactant intactId="EBI-6152154">
        <id>P68466</id>
        <label>OPG044</label>
    </interactant>
    <organismsDiffer>true</organismsDiffer>
    <experiments>6</experiments>
</comment>
<comment type="interaction">
    <interactant intactId="EBI-353779">
        <id>O00571</id>
    </interactant>
    <interactant intactId="EBI-8022707">
        <id>P68467</id>
        <label>OPG044</label>
    </interactant>
    <organismsDiffer>true</organismsDiffer>
    <experiments>6</experiments>
</comment>
<comment type="interaction">
    <interactant intactId="EBI-353779">
        <id>O00571</id>
    </interactant>
    <interactant intactId="EBI-8430745">
        <id>P03427</id>
        <label>PB2</label>
    </interactant>
    <organismsDiffer>true</organismsDiffer>
    <experiments>3</experiments>
</comment>
<comment type="interaction">
    <interactant intactId="EBI-353779">
        <id>O00571</id>
    </interactant>
    <interactant intactId="EBI-6164389">
        <id>P04608</id>
        <label>tat</label>
    </interactant>
    <organismsDiffer>true</organismsDiffer>
    <experiments>4</experiments>
</comment>
<comment type="interaction">
    <interactant intactId="EBI-353779">
        <id>O00571</id>
    </interactant>
    <interactant intactId="EBI-8010314">
        <id>Q923J1</id>
        <label>Trpm7</label>
    </interactant>
    <organismsDiffer>true</organismsDiffer>
    <experiments>2</experiments>
</comment>
<comment type="interaction">
    <interactant intactId="EBI-353779">
        <id>O00571</id>
    </interactant>
    <interactant intactId="EBI-9209740">
        <id>PRO_0000037517</id>
        <dbReference type="UniProtKB" id="P26664"/>
    </interactant>
    <organismsDiffer>true</organismsDiffer>
    <experiments>3</experiments>
</comment>
<comment type="interaction">
    <interactant intactId="EBI-353779">
        <id>O00571</id>
    </interactant>
    <interactant intactId="EBI-6377335">
        <id>PRO_0000037566</id>
        <dbReference type="UniProtKB" id="P27958"/>
    </interactant>
    <organismsDiffer>true</organismsDiffer>
    <experiments>11</experiments>
</comment>
<comment type="interaction">
    <interactant intactId="EBI-353779">
        <id>O00571</id>
    </interactant>
    <interactant intactId="EBI-9254385">
        <id>PRO_0000037559</id>
        <dbReference type="UniProtKB" id="Q5EG65"/>
    </interactant>
    <organismsDiffer>true</organismsDiffer>
    <experiments>4</experiments>
</comment>
<comment type="interaction">
    <interactant intactId="EBI-353779">
        <id>O00571</id>
    </interactant>
    <interactant intactId="EBI-6674379">
        <id>Q99IB8</id>
    </interactant>
    <organismsDiffer>true</organismsDiffer>
    <experiments>9</experiments>
</comment>
<comment type="interaction">
    <interactant intactId="EBI-353779">
        <id>O00571</id>
    </interactant>
    <interactant intactId="EBI-6863754">
        <id>PRO_0000037541</id>
        <dbReference type="UniProtKB" id="Q9WMX2"/>
    </interactant>
    <organismsDiffer>true</organismsDiffer>
    <experiments>4</experiments>
</comment>
<comment type="subcellular location">
    <subcellularLocation>
        <location evidence="35 49">Cell membrane</location>
    </subcellularLocation>
    <subcellularLocation>
        <location evidence="5 8 10 17 20 32 49 50 54">Nucleus</location>
    </subcellularLocation>
    <subcellularLocation>
        <location evidence="5 8 10 17 20 24 28 30 31 32 35 40 42 45 47 48 50 52 54 55">Cytoplasm</location>
    </subcellularLocation>
    <subcellularLocation>
        <location evidence="17 19 34 47">Cytoplasm</location>
        <location evidence="17 19 34 47">Stress granule</location>
    </subcellularLocation>
    <subcellularLocation>
        <location evidence="1">Inflammasome</location>
    </subcellularLocation>
    <subcellularLocation>
        <location evidence="45">Cell projection</location>
        <location evidence="45">Lamellipodium</location>
    </subcellularLocation>
    <subcellularLocation>
        <location evidence="46">Cytoplasm</location>
        <location evidence="46">Cytoskeleton</location>
        <location evidence="46">Microtubule organizing center</location>
        <location evidence="46">Centrosome</location>
    </subcellularLocation>
    <text evidence="8 17 20 24 30 32 35 45 46 49 50 54">Shuttles between the nucleus and the cytosol (PubMed:15507209, PubMed:18636090, PubMed:29899501, PubMed:30131165, PubMed:31575075). Exported from the nucleus partly through the XPO1/CRM1 system and partly through NXF1/TAP (PubMed:15507209, PubMed:18596238, PubMed:18636090, PubMed:30131165, PubMed:31575075). Localizes to nuclear pores on the outer side of the nuclear membrane (PubMed:15507209). In the cytosol, partly colocalizes with mitochondria (PubMed:20127681). At G0, predominantly located in nucleus. In G1/S phase, predominantly cytoplasmic (PubMed:22034099). During prophase/prometaphase, localizes in close proximity to the condensing chromosomes (PubMed:21730191, PubMed:30131165). During telophase, localizes around the newly synthesized nuclear membrane and in the cytoplasm (PubMed:22034099). Colocalizes with TRPV4 at the plasma membrane. When TRPV4 channel is activated, intracellular Ca(2+) levels increase and the calmodulin/CAMKII pathway is activated, relocalizes to the nucleus (PubMed:29899501). WNT3A stimulation promotes DDX3 recruitment to the plasma membrane (PubMed:23413191). At the leading edge of migrating fibroblasts, colocalizes with CAPRIN1 and PABPC1 (PubMed:28733330). Localizes to centrosome throughout the cell cycle and associates with TP53 at centrosome during mitosis (PubMed:28842590). Translocates to the nucleus in response to HPIV-3 virus-mediated infection (PubMed:31575075).</text>
</comment>
<comment type="alternative products">
    <event type="alternative splicing"/>
    <isoform>
        <id>O00571-1</id>
        <name>1</name>
        <sequence type="displayed"/>
    </isoform>
    <isoform>
        <id>O00571-2</id>
        <name>2</name>
        <sequence type="described" ref="VSP_042830"/>
    </isoform>
</comment>
<comment type="tissue specificity">
    <text evidence="7 9 10">Widely expressed (PubMed:15294876). In testis, expressed in spermatids (PubMed:15294876). Expressed in epidermis and liver (at protein level) (PubMed:16301996, PubMed:16818630).</text>
</comment>
<comment type="domain">
    <text evidence="54">The C-terminus (residues 536-662) is dispensable for DDX3X trafficking.</text>
</comment>
<comment type="PTM">
    <text evidence="16 32 36 48">Phosphorylated by TBK1; the phosphorylation is required for the synergistic induction of IFNB mediated by TBK1 and DDX3X (PubMed:18583960). Phosphorylated by IKBKE at Ser-102 after ssRNA viral infection; enhances the induction of INFB promoter by IRF3 (PubMed:18583960, PubMed:23478265). The cytoplasmic form is highly phosphorylated in the G1/S phase of the cell cycle and much less at G2/M (PubMed:22034099). Phosphorylation by CSNK1E may inhibit RNA-stimulated ATPase activity (PubMed:29222110).</text>
</comment>
<comment type="PTM">
    <text evidence="21">Upon stimulation of death receptors, including TNFRSF10B, recruited to receptors and cleaved by caspases. Proteolytic fragments remain associated with the receptors. This cleavage presumably inactivates DDX3X anti-apoptotic function.</text>
</comment>
<comment type="PTM">
    <text evidence="55">Ubiquitinated by RNF39 via 'Lys-48'-linked ubiquitination; leading to proteasomal degradation.</text>
</comment>
<comment type="disease" evidence="39">
    <disease id="DI-04512">
        <name>Intellectual developmental disorder, X-linked, syndromic, Snijders Blok type</name>
        <acronym>MRXSSB</acronym>
        <description>A disorder characterized by mild to severe intellectual disability, hypotonia, movement disorders, behavior problems, corpus callosum hypoplasia, and epilepsy. Additionally, patients manifest variable non-neurologic features such as joint hyperlaxity, skin pigmentary abnormalities, cleft lip and/or palate, hearing and visual impairment, and precocious puberty.</description>
        <dbReference type="MIM" id="300958"/>
    </disease>
    <text>The disease is caused by variants affecting the gene represented in this entry.</text>
</comment>
<comment type="miscellaneous">
    <text evidence="56">Encoded by an chromosome X-linked gene which may escape X chromosome inactivation in females. DDX3Y, its homolog on chromosome Y, is located on the Y non-recombinant portion.</text>
</comment>
<comment type="similarity">
    <text evidence="59">Belongs to the DEAD box helicase family. DDX3/DED1 subfamily.</text>
</comment>
<comment type="caution">
    <text evidence="8 50 54">The role of the nuclear export signal (NES) motif in XPO1-mediated DDX3X export is controversial (PubMed:15507209, PubMed:30131165, PubMed:31575075). In one study, NES has been found dispensable for DDX3X export while the helicase domain mediates the interaction with XPO1 (PubMed:15507209). However, in two other studies, DDX3X nuclear export is dependent on both NES and Ran in its GTP-bound form while the helicase domain is not required (PubMed:30131165, PubMed:31575075).</text>
</comment>
<proteinExistence type="evidence at protein level"/>
<accession>O00571</accession>
<accession>A8K538</accession>
<accession>B4E3E8</accession>
<accession>O15536</accession>
<reference key="1">
    <citation type="journal article" date="1995" name="Korean J. Biochem.">
        <title>Identification of a human homolog of a putative RNA helicase gene (mDEAD3) expressed in mouse erythroid cells.</title>
        <authorList>
            <person name="Chung J."/>
            <person name="Lee S.-G."/>
            <person name="Song K."/>
        </authorList>
    </citation>
    <scope>NUCLEOTIDE SEQUENCE [MRNA] (ISOFORM 1)</scope>
</reference>
<reference key="2">
    <citation type="journal article" date="1999" name="Virology">
        <title>Hepatitis C virus core protein interacts with a human DEAD box protein DDX3.</title>
        <authorList>
            <person name="Owsianka A.M."/>
            <person name="Patel A.H."/>
        </authorList>
    </citation>
    <scope>NUCLEOTIDE SEQUENCE [MRNA] (ISOFORM 1)</scope>
    <scope>SUBCELLULAR LOCATION</scope>
    <scope>INTERACTION WITH HEPATITIS C VIRUS CORE PROTEIN (MICROBIAL INFECTION)</scope>
    <source>
        <tissue>Liver</tissue>
    </source>
</reference>
<reference key="3">
    <citation type="journal article" date="1997" name="Science">
        <title>Functional coherence of the human Y chromosome.</title>
        <authorList>
            <person name="Lahn B.T."/>
            <person name="Page D.C."/>
        </authorList>
    </citation>
    <scope>NUCLEOTIDE SEQUENCE [MRNA] (ISOFORM 1)</scope>
    <scope>ESCAPE FROM X-INACTIVATION</scope>
</reference>
<reference key="4">
    <citation type="journal article" date="2004" name="Nat. Genet.">
        <title>Complete sequencing and characterization of 21,243 full-length human cDNAs.</title>
        <authorList>
            <person name="Ota T."/>
            <person name="Suzuki Y."/>
            <person name="Nishikawa T."/>
            <person name="Otsuki T."/>
            <person name="Sugiyama T."/>
            <person name="Irie R."/>
            <person name="Wakamatsu A."/>
            <person name="Hayashi K."/>
            <person name="Sato H."/>
            <person name="Nagai K."/>
            <person name="Kimura K."/>
            <person name="Makita H."/>
            <person name="Sekine M."/>
            <person name="Obayashi M."/>
            <person name="Nishi T."/>
            <person name="Shibahara T."/>
            <person name="Tanaka T."/>
            <person name="Ishii S."/>
            <person name="Yamamoto J."/>
            <person name="Saito K."/>
            <person name="Kawai Y."/>
            <person name="Isono Y."/>
            <person name="Nakamura Y."/>
            <person name="Nagahari K."/>
            <person name="Murakami K."/>
            <person name="Yasuda T."/>
            <person name="Iwayanagi T."/>
            <person name="Wagatsuma M."/>
            <person name="Shiratori A."/>
            <person name="Sudo H."/>
            <person name="Hosoiri T."/>
            <person name="Kaku Y."/>
            <person name="Kodaira H."/>
            <person name="Kondo H."/>
            <person name="Sugawara M."/>
            <person name="Takahashi M."/>
            <person name="Kanda K."/>
            <person name="Yokoi T."/>
            <person name="Furuya T."/>
            <person name="Kikkawa E."/>
            <person name="Omura Y."/>
            <person name="Abe K."/>
            <person name="Kamihara K."/>
            <person name="Katsuta N."/>
            <person name="Sato K."/>
            <person name="Tanikawa M."/>
            <person name="Yamazaki M."/>
            <person name="Ninomiya K."/>
            <person name="Ishibashi T."/>
            <person name="Yamashita H."/>
            <person name="Murakawa K."/>
            <person name="Fujimori K."/>
            <person name="Tanai H."/>
            <person name="Kimata M."/>
            <person name="Watanabe M."/>
            <person name="Hiraoka S."/>
            <person name="Chiba Y."/>
            <person name="Ishida S."/>
            <person name="Ono Y."/>
            <person name="Takiguchi S."/>
            <person name="Watanabe S."/>
            <person name="Yosida M."/>
            <person name="Hotuta T."/>
            <person name="Kusano J."/>
            <person name="Kanehori K."/>
            <person name="Takahashi-Fujii A."/>
            <person name="Hara H."/>
            <person name="Tanase T.-O."/>
            <person name="Nomura Y."/>
            <person name="Togiya S."/>
            <person name="Komai F."/>
            <person name="Hara R."/>
            <person name="Takeuchi K."/>
            <person name="Arita M."/>
            <person name="Imose N."/>
            <person name="Musashino K."/>
            <person name="Yuuki H."/>
            <person name="Oshima A."/>
            <person name="Sasaki N."/>
            <person name="Aotsuka S."/>
            <person name="Yoshikawa Y."/>
            <person name="Matsunawa H."/>
            <person name="Ichihara T."/>
            <person name="Shiohata N."/>
            <person name="Sano S."/>
            <person name="Moriya S."/>
            <person name="Momiyama H."/>
            <person name="Satoh N."/>
            <person name="Takami S."/>
            <person name="Terashima Y."/>
            <person name="Suzuki O."/>
            <person name="Nakagawa S."/>
            <person name="Senoh A."/>
            <person name="Mizoguchi H."/>
            <person name="Goto Y."/>
            <person name="Shimizu F."/>
            <person name="Wakebe H."/>
            <person name="Hishigaki H."/>
            <person name="Watanabe T."/>
            <person name="Sugiyama A."/>
            <person name="Takemoto M."/>
            <person name="Kawakami B."/>
            <person name="Yamazaki M."/>
            <person name="Watanabe K."/>
            <person name="Kumagai A."/>
            <person name="Itakura S."/>
            <person name="Fukuzumi Y."/>
            <person name="Fujimori Y."/>
            <person name="Komiyama M."/>
            <person name="Tashiro H."/>
            <person name="Tanigami A."/>
            <person name="Fujiwara T."/>
            <person name="Ono T."/>
            <person name="Yamada K."/>
            <person name="Fujii Y."/>
            <person name="Ozaki K."/>
            <person name="Hirao M."/>
            <person name="Ohmori Y."/>
            <person name="Kawabata A."/>
            <person name="Hikiji T."/>
            <person name="Kobatake N."/>
            <person name="Inagaki H."/>
            <person name="Ikema Y."/>
            <person name="Okamoto S."/>
            <person name="Okitani R."/>
            <person name="Kawakami T."/>
            <person name="Noguchi S."/>
            <person name="Itoh T."/>
            <person name="Shigeta K."/>
            <person name="Senba T."/>
            <person name="Matsumura K."/>
            <person name="Nakajima Y."/>
            <person name="Mizuno T."/>
            <person name="Morinaga M."/>
            <person name="Sasaki M."/>
            <person name="Togashi T."/>
            <person name="Oyama M."/>
            <person name="Hata H."/>
            <person name="Watanabe M."/>
            <person name="Komatsu T."/>
            <person name="Mizushima-Sugano J."/>
            <person name="Satoh T."/>
            <person name="Shirai Y."/>
            <person name="Takahashi Y."/>
            <person name="Nakagawa K."/>
            <person name="Okumura K."/>
            <person name="Nagase T."/>
            <person name="Nomura N."/>
            <person name="Kikuchi H."/>
            <person name="Masuho Y."/>
            <person name="Yamashita R."/>
            <person name="Nakai K."/>
            <person name="Yada T."/>
            <person name="Nakamura Y."/>
            <person name="Ohara O."/>
            <person name="Isogai T."/>
            <person name="Sugano S."/>
        </authorList>
    </citation>
    <scope>NUCLEOTIDE SEQUENCE [LARGE SCALE MRNA] (ISOFORMS 1 AND 2)</scope>
    <source>
        <tissue>Uterus</tissue>
    </source>
</reference>
<reference key="5">
    <citation type="journal article" date="2005" name="Nature">
        <title>The DNA sequence of the human X chromosome.</title>
        <authorList>
            <person name="Ross M.T."/>
            <person name="Grafham D.V."/>
            <person name="Coffey A.J."/>
            <person name="Scherer S."/>
            <person name="McLay K."/>
            <person name="Muzny D."/>
            <person name="Platzer M."/>
            <person name="Howell G.R."/>
            <person name="Burrows C."/>
            <person name="Bird C.P."/>
            <person name="Frankish A."/>
            <person name="Lovell F.L."/>
            <person name="Howe K.L."/>
            <person name="Ashurst J.L."/>
            <person name="Fulton R.S."/>
            <person name="Sudbrak R."/>
            <person name="Wen G."/>
            <person name="Jones M.C."/>
            <person name="Hurles M.E."/>
            <person name="Andrews T.D."/>
            <person name="Scott C.E."/>
            <person name="Searle S."/>
            <person name="Ramser J."/>
            <person name="Whittaker A."/>
            <person name="Deadman R."/>
            <person name="Carter N.P."/>
            <person name="Hunt S.E."/>
            <person name="Chen R."/>
            <person name="Cree A."/>
            <person name="Gunaratne P."/>
            <person name="Havlak P."/>
            <person name="Hodgson A."/>
            <person name="Metzker M.L."/>
            <person name="Richards S."/>
            <person name="Scott G."/>
            <person name="Steffen D."/>
            <person name="Sodergren E."/>
            <person name="Wheeler D.A."/>
            <person name="Worley K.C."/>
            <person name="Ainscough R."/>
            <person name="Ambrose K.D."/>
            <person name="Ansari-Lari M.A."/>
            <person name="Aradhya S."/>
            <person name="Ashwell R.I."/>
            <person name="Babbage A.K."/>
            <person name="Bagguley C.L."/>
            <person name="Ballabio A."/>
            <person name="Banerjee R."/>
            <person name="Barker G.E."/>
            <person name="Barlow K.F."/>
            <person name="Barrett I.P."/>
            <person name="Bates K.N."/>
            <person name="Beare D.M."/>
            <person name="Beasley H."/>
            <person name="Beasley O."/>
            <person name="Beck A."/>
            <person name="Bethel G."/>
            <person name="Blechschmidt K."/>
            <person name="Brady N."/>
            <person name="Bray-Allen S."/>
            <person name="Bridgeman A.M."/>
            <person name="Brown A.J."/>
            <person name="Brown M.J."/>
            <person name="Bonnin D."/>
            <person name="Bruford E.A."/>
            <person name="Buhay C."/>
            <person name="Burch P."/>
            <person name="Burford D."/>
            <person name="Burgess J."/>
            <person name="Burrill W."/>
            <person name="Burton J."/>
            <person name="Bye J.M."/>
            <person name="Carder C."/>
            <person name="Carrel L."/>
            <person name="Chako J."/>
            <person name="Chapman J.C."/>
            <person name="Chavez D."/>
            <person name="Chen E."/>
            <person name="Chen G."/>
            <person name="Chen Y."/>
            <person name="Chen Z."/>
            <person name="Chinault C."/>
            <person name="Ciccodicola A."/>
            <person name="Clark S.Y."/>
            <person name="Clarke G."/>
            <person name="Clee C.M."/>
            <person name="Clegg S."/>
            <person name="Clerc-Blankenburg K."/>
            <person name="Clifford K."/>
            <person name="Cobley V."/>
            <person name="Cole C.G."/>
            <person name="Conquer J.S."/>
            <person name="Corby N."/>
            <person name="Connor R.E."/>
            <person name="David R."/>
            <person name="Davies J."/>
            <person name="Davis C."/>
            <person name="Davis J."/>
            <person name="Delgado O."/>
            <person name="Deshazo D."/>
            <person name="Dhami P."/>
            <person name="Ding Y."/>
            <person name="Dinh H."/>
            <person name="Dodsworth S."/>
            <person name="Draper H."/>
            <person name="Dugan-Rocha S."/>
            <person name="Dunham A."/>
            <person name="Dunn M."/>
            <person name="Durbin K.J."/>
            <person name="Dutta I."/>
            <person name="Eades T."/>
            <person name="Ellwood M."/>
            <person name="Emery-Cohen A."/>
            <person name="Errington H."/>
            <person name="Evans K.L."/>
            <person name="Faulkner L."/>
            <person name="Francis F."/>
            <person name="Frankland J."/>
            <person name="Fraser A.E."/>
            <person name="Galgoczy P."/>
            <person name="Gilbert J."/>
            <person name="Gill R."/>
            <person name="Gloeckner G."/>
            <person name="Gregory S.G."/>
            <person name="Gribble S."/>
            <person name="Griffiths C."/>
            <person name="Grocock R."/>
            <person name="Gu Y."/>
            <person name="Gwilliam R."/>
            <person name="Hamilton C."/>
            <person name="Hart E.A."/>
            <person name="Hawes A."/>
            <person name="Heath P.D."/>
            <person name="Heitmann K."/>
            <person name="Hennig S."/>
            <person name="Hernandez J."/>
            <person name="Hinzmann B."/>
            <person name="Ho S."/>
            <person name="Hoffs M."/>
            <person name="Howden P.J."/>
            <person name="Huckle E.J."/>
            <person name="Hume J."/>
            <person name="Hunt P.J."/>
            <person name="Hunt A.R."/>
            <person name="Isherwood J."/>
            <person name="Jacob L."/>
            <person name="Johnson D."/>
            <person name="Jones S."/>
            <person name="de Jong P.J."/>
            <person name="Joseph S.S."/>
            <person name="Keenan S."/>
            <person name="Kelly S."/>
            <person name="Kershaw J.K."/>
            <person name="Khan Z."/>
            <person name="Kioschis P."/>
            <person name="Klages S."/>
            <person name="Knights A.J."/>
            <person name="Kosiura A."/>
            <person name="Kovar-Smith C."/>
            <person name="Laird G.K."/>
            <person name="Langford C."/>
            <person name="Lawlor S."/>
            <person name="Leversha M."/>
            <person name="Lewis L."/>
            <person name="Liu W."/>
            <person name="Lloyd C."/>
            <person name="Lloyd D.M."/>
            <person name="Loulseged H."/>
            <person name="Loveland J.E."/>
            <person name="Lovell J.D."/>
            <person name="Lozado R."/>
            <person name="Lu J."/>
            <person name="Lyne R."/>
            <person name="Ma J."/>
            <person name="Maheshwari M."/>
            <person name="Matthews L.H."/>
            <person name="McDowall J."/>
            <person name="McLaren S."/>
            <person name="McMurray A."/>
            <person name="Meidl P."/>
            <person name="Meitinger T."/>
            <person name="Milne S."/>
            <person name="Miner G."/>
            <person name="Mistry S.L."/>
            <person name="Morgan M."/>
            <person name="Morris S."/>
            <person name="Mueller I."/>
            <person name="Mullikin J.C."/>
            <person name="Nguyen N."/>
            <person name="Nordsiek G."/>
            <person name="Nyakatura G."/>
            <person name="O'dell C.N."/>
            <person name="Okwuonu G."/>
            <person name="Palmer S."/>
            <person name="Pandian R."/>
            <person name="Parker D."/>
            <person name="Parrish J."/>
            <person name="Pasternak S."/>
            <person name="Patel D."/>
            <person name="Pearce A.V."/>
            <person name="Pearson D.M."/>
            <person name="Pelan S.E."/>
            <person name="Perez L."/>
            <person name="Porter K.M."/>
            <person name="Ramsey Y."/>
            <person name="Reichwald K."/>
            <person name="Rhodes S."/>
            <person name="Ridler K.A."/>
            <person name="Schlessinger D."/>
            <person name="Schueler M.G."/>
            <person name="Sehra H.K."/>
            <person name="Shaw-Smith C."/>
            <person name="Shen H."/>
            <person name="Sheridan E.M."/>
            <person name="Shownkeen R."/>
            <person name="Skuce C.D."/>
            <person name="Smith M.L."/>
            <person name="Sotheran E.C."/>
            <person name="Steingruber H.E."/>
            <person name="Steward C.A."/>
            <person name="Storey R."/>
            <person name="Swann R.M."/>
            <person name="Swarbreck D."/>
            <person name="Tabor P.E."/>
            <person name="Taudien S."/>
            <person name="Taylor T."/>
            <person name="Teague B."/>
            <person name="Thomas K."/>
            <person name="Thorpe A."/>
            <person name="Timms K."/>
            <person name="Tracey A."/>
            <person name="Trevanion S."/>
            <person name="Tromans A.C."/>
            <person name="d'Urso M."/>
            <person name="Verduzco D."/>
            <person name="Villasana D."/>
            <person name="Waldron L."/>
            <person name="Wall M."/>
            <person name="Wang Q."/>
            <person name="Warren J."/>
            <person name="Warry G.L."/>
            <person name="Wei X."/>
            <person name="West A."/>
            <person name="Whitehead S.L."/>
            <person name="Whiteley M.N."/>
            <person name="Wilkinson J.E."/>
            <person name="Willey D.L."/>
            <person name="Williams G."/>
            <person name="Williams L."/>
            <person name="Williamson A."/>
            <person name="Williamson H."/>
            <person name="Wilming L."/>
            <person name="Woodmansey R.L."/>
            <person name="Wray P.W."/>
            <person name="Yen J."/>
            <person name="Zhang J."/>
            <person name="Zhou J."/>
            <person name="Zoghbi H."/>
            <person name="Zorilla S."/>
            <person name="Buck D."/>
            <person name="Reinhardt R."/>
            <person name="Poustka A."/>
            <person name="Rosenthal A."/>
            <person name="Lehrach H."/>
            <person name="Meindl A."/>
            <person name="Minx P.J."/>
            <person name="Hillier L.W."/>
            <person name="Willard H.F."/>
            <person name="Wilson R.K."/>
            <person name="Waterston R.H."/>
            <person name="Rice C.M."/>
            <person name="Vaudin M."/>
            <person name="Coulson A."/>
            <person name="Nelson D.L."/>
            <person name="Weinstock G."/>
            <person name="Sulston J.E."/>
            <person name="Durbin R.M."/>
            <person name="Hubbard T."/>
            <person name="Gibbs R.A."/>
            <person name="Beck S."/>
            <person name="Rogers J."/>
            <person name="Bentley D.R."/>
        </authorList>
    </citation>
    <scope>NUCLEOTIDE SEQUENCE [LARGE SCALE GENOMIC DNA]</scope>
</reference>
<reference key="6">
    <citation type="submission" date="2005-09" db="EMBL/GenBank/DDBJ databases">
        <authorList>
            <person name="Mural R.J."/>
            <person name="Istrail S."/>
            <person name="Sutton G.G."/>
            <person name="Florea L."/>
            <person name="Halpern A.L."/>
            <person name="Mobarry C.M."/>
            <person name="Lippert R."/>
            <person name="Walenz B."/>
            <person name="Shatkay H."/>
            <person name="Dew I."/>
            <person name="Miller J.R."/>
            <person name="Flanigan M.J."/>
            <person name="Edwards N.J."/>
            <person name="Bolanos R."/>
            <person name="Fasulo D."/>
            <person name="Halldorsson B.V."/>
            <person name="Hannenhalli S."/>
            <person name="Turner R."/>
            <person name="Yooseph S."/>
            <person name="Lu F."/>
            <person name="Nusskern D.R."/>
            <person name="Shue B.C."/>
            <person name="Zheng X.H."/>
            <person name="Zhong F."/>
            <person name="Delcher A.L."/>
            <person name="Huson D.H."/>
            <person name="Kravitz S.A."/>
            <person name="Mouchard L."/>
            <person name="Reinert K."/>
            <person name="Remington K.A."/>
            <person name="Clark A.G."/>
            <person name="Waterman M.S."/>
            <person name="Eichler E.E."/>
            <person name="Adams M.D."/>
            <person name="Hunkapiller M.W."/>
            <person name="Myers E.W."/>
            <person name="Venter J.C."/>
        </authorList>
    </citation>
    <scope>NUCLEOTIDE SEQUENCE [LARGE SCALE GENOMIC DNA]</scope>
</reference>
<reference key="7">
    <citation type="journal article" date="2004" name="Genome Res.">
        <title>The status, quality, and expansion of the NIH full-length cDNA project: the Mammalian Gene Collection (MGC).</title>
        <authorList>
            <consortium name="The MGC Project Team"/>
        </authorList>
    </citation>
    <scope>NUCLEOTIDE SEQUENCE [LARGE SCALE MRNA] (ISOFORM 1)</scope>
    <source>
        <tissue>Skin</tissue>
    </source>
</reference>
<reference key="8">
    <citation type="journal article" date="2000" name="J. Exp. Med.">
        <title>An N-acetylated natural ligand of human histocompatibility leukocyte antigen (HLA)-B39. Classical major histocompatibility complex class I proteins bind peptides with a blocked NH(2) terminus in vivo.</title>
        <authorList>
            <person name="Yaguee J."/>
            <person name="Alvarez I."/>
            <person name="Rognan D."/>
            <person name="Ramos M."/>
            <person name="Vazquez J."/>
            <person name="Lopez de Castro J.A."/>
        </authorList>
    </citation>
    <scope>PROTEIN SEQUENCE OF 2-10</scope>
    <scope>ACETYLATION AT SER-2</scope>
</reference>
<reference key="9">
    <citation type="journal article" date="2003" name="Nature">
        <title>Proteomic characterization of the human centrosome by protein correlation profiling.</title>
        <authorList>
            <person name="Andersen J.S."/>
            <person name="Wilkinson C.J."/>
            <person name="Mayor T."/>
            <person name="Mortensen P."/>
            <person name="Nigg E.A."/>
            <person name="Mann M."/>
        </authorList>
    </citation>
    <scope>IDENTIFICATION BY MASS SPECTROMETRY</scope>
    <source>
        <tissue>Lymphoblast</tissue>
    </source>
</reference>
<reference key="10">
    <citation type="journal article" date="2004" name="Cell">
        <title>Requirement of DDX3 DEAD box RNA helicase for HIV-1 Rev-RRE export function.</title>
        <authorList>
            <person name="Yedavalli V.S."/>
            <person name="Neuveut C."/>
            <person name="Chi Y.-H."/>
            <person name="Kleiman L."/>
            <person name="Jeang K.-T."/>
        </authorList>
    </citation>
    <scope>FUNCTION</scope>
    <scope>FUNCTION (MICROBIAL INFECTION)</scope>
    <scope>INTERACTION WITH XPO1</scope>
    <scope>INTERACTION WITH HIV-1 PROTEIN REV (MICROBIAL INFECTION)</scope>
    <scope>MUTAGENESIS OF LYS-230 AND SER-382</scope>
    <scope>SUBCELLULAR LOCATION</scope>
    <scope>CATALYTIC ACTIVITY</scope>
</reference>
<reference key="11">
    <citation type="journal article" date="2004" name="Hum. Mol. Genet.">
        <title>The AZFa gene DBY (DDX3Y) is widely transcribed but the protein is limited to the male germ cells by translation control.</title>
        <authorList>
            <person name="Ditton H.J."/>
            <person name="Zimmer J."/>
            <person name="Kamp C."/>
            <person name="Rajpert-De Meyts E."/>
            <person name="Vogt P.H."/>
        </authorList>
    </citation>
    <scope>TISSUE SPECIFICITY</scope>
</reference>
<reference key="12">
    <citation type="journal article" date="2005" name="Nat. Biotechnol.">
        <title>Immunoaffinity profiling of tyrosine phosphorylation in cancer cells.</title>
        <authorList>
            <person name="Rush J."/>
            <person name="Moritz A."/>
            <person name="Lee K.A."/>
            <person name="Guo A."/>
            <person name="Goss V.L."/>
            <person name="Spek E.J."/>
            <person name="Zhang H."/>
            <person name="Zha X.-M."/>
            <person name="Polakiewicz R.D."/>
            <person name="Comb M.J."/>
        </authorList>
    </citation>
    <scope>IDENTIFICATION BY MASS SPECTROMETRY [LARGE SCALE ANALYSIS]</scope>
</reference>
<reference key="13">
    <citation type="journal article" date="2006" name="Cancer Res.">
        <title>DDX3, a DEAD box RNA helicase with tumor growth-suppressive property and transcriptional regulation activity of the p21waf1/cip1 promoter, is a candidate tumor suppressor.</title>
        <authorList>
            <person name="Chao C.H."/>
            <person name="Chen C.M."/>
            <person name="Cheng P.L."/>
            <person name="Shih J.W."/>
            <person name="Tsou A.P."/>
            <person name="Lee Y.H."/>
        </authorList>
    </citation>
    <scope>FUNCTION</scope>
    <scope>INTERACTION WITH SP1</scope>
    <scope>SUBCELLULAR LOCATION</scope>
    <scope>TISSUE SPECIFICITY</scope>
    <scope>MUTAGENESIS OF GLU-348 AND 382-SER--THR-384</scope>
</reference>
<reference key="14">
    <citation type="journal article" date="2006" name="Oncogene">
        <title>DDX3, a DEAD box RNA helicase, is deregulated in hepatitis virus-associated hepatocellular carcinoma and is involved in cell growth control.</title>
        <authorList>
            <person name="Chang P.C."/>
            <person name="Chi C.W."/>
            <person name="Chau G.Y."/>
            <person name="Li F.Y."/>
            <person name="Tsai Y.H."/>
            <person name="Wu J.C."/>
            <person name="Wu Lee Y.H."/>
        </authorList>
    </citation>
    <scope>TISSUE SPECIFICITY</scope>
</reference>
<reference key="15">
    <citation type="journal article" date="2007" name="Proteins">
        <title>Human DEAD-box ATPase DDX3 shows a relaxed nucleoside substrate specificity.</title>
        <authorList>
            <person name="Franca R."/>
            <person name="Belfiore A."/>
            <person name="Spadari S."/>
            <person name="Maga G."/>
        </authorList>
    </citation>
    <scope>FUNCTION</scope>
    <scope>CATALYTIC ACTIVITY</scope>
    <scope>BIOPHYSICOCHEMICAL PROPERTIES</scope>
</reference>
<reference key="16">
    <citation type="journal article" date="2007" name="RNA">
        <title>Protein composition of human mRNPs spliced in vitro and differential requirements for mRNP protein recruitment.</title>
        <authorList>
            <person name="Merz C."/>
            <person name="Urlaub H."/>
            <person name="Will C.L."/>
            <person name="Luhrmann R."/>
        </authorList>
    </citation>
    <scope>ASSOCIATION WITH MRNPS</scope>
</reference>
<reference key="17">
    <citation type="journal article" date="2008" name="Cell Death Differ.">
        <title>Identification of an antiapoptotic protein complex at death receptors.</title>
        <authorList>
            <person name="Sun M."/>
            <person name="Song L."/>
            <person name="Li Y."/>
            <person name="Zhou T."/>
            <person name="Jope R.S."/>
        </authorList>
    </citation>
    <scope>FUNCTION</scope>
    <scope>INTERACTION WITH FAS; GSK3A; GSK3B; TNFRSF10A AND TNFRSF10B</scope>
    <scope>CLEAVAGE BY CASPASES</scope>
</reference>
<reference key="18">
    <citation type="journal article" date="2008" name="EMBO J.">
        <title>The DEAD-box helicase DDX3X is a critical component of the TANK-binding kinase 1-dependent innate immune response.</title>
        <authorList>
            <person name="Soulat D."/>
            <person name="Burckstummer T."/>
            <person name="Westermayer S."/>
            <person name="Goncalves A."/>
            <person name="Bauch A."/>
            <person name="Stefanovic A."/>
            <person name="Hantschel O."/>
            <person name="Bennett K.L."/>
            <person name="Decker T."/>
            <person name="Superti-Furga G."/>
        </authorList>
    </citation>
    <scope>FUNCTION</scope>
    <scope>FUNCTION (MICROBIAL INFECTION)</scope>
    <scope>PHOSPHORYLATION AT SER-181; SER-183; SER-240; SER-269; SER-429; THR-438; SER-442; SER-456; SER-520; THR-542 AND SER-543</scope>
    <scope>MUTAGENESIS OF SER-181; SER-183; LYS-230; SER-240; SER-269; SER-429; THR-438; SER-442; SER-456 AND SER-520</scope>
</reference>
<reference key="19">
    <citation type="journal article" date="2008" name="EMBO J.">
        <title>Viral targeting of DEAD box protein 3 reveals its role in TBK1/IKKepsilon-mediated IRF activation.</title>
        <authorList>
            <person name="Schroder M."/>
            <person name="Baran M."/>
            <person name="Bowie A.G."/>
        </authorList>
    </citation>
    <scope>FUNCTION</scope>
    <scope>INTERACTION WITH VACV PROTEIN K7 (MICROBIAL INFECTION) AND IKBKE</scope>
    <scope>SUBCELLULAR LOCATION</scope>
    <scope>MUTAGENESIS OF LYS-230</scope>
</reference>
<reference key="20">
    <citation type="journal article" date="2008" name="Hum. Mol. Genet.">
        <title>TDRD3, a novel Tudor domain-containing protein, localizes to cytoplasmic stress granules.</title>
        <authorList>
            <person name="Goulet I."/>
            <person name="Boisvenue S."/>
            <person name="Mokas S."/>
            <person name="Mazroui R."/>
            <person name="Cote J."/>
        </authorList>
    </citation>
    <scope>INTERACTION WITH TDRD3</scope>
    <scope>SUBCELLULAR LOCATION</scope>
</reference>
<reference key="21">
    <citation type="journal article" date="2008" name="Mol. Biol. Cell">
        <title>The DEAD-box RNA helicase DDX3 associates with export messenger ribonucleoproteins as well as tip-associated protein and participates in translational control.</title>
        <authorList>
            <person name="Lai M.C."/>
            <person name="Lee Y.H."/>
            <person name="Tarn W.Y."/>
        </authorList>
    </citation>
    <scope>FUNCTION</scope>
    <scope>SUBCELLULAR LOCATION</scope>
    <scope>INTERACTION WITH EIF4A1; EIF2S1; NXF1 AND PABPC1</scope>
    <scope>ASSOCIATION WITH MRNPS</scope>
    <scope>MUTAGENESIS OF SER-382</scope>
</reference>
<reference key="22">
    <citation type="journal article" date="2008" name="Nucleic Acids Res.">
        <title>Human DDX3 functions in translation and interacts with the translation initiation factor eIF3.</title>
        <authorList>
            <person name="Lee C.S."/>
            <person name="Dias A.P."/>
            <person name="Jedrychowski M."/>
            <person name="Patel A.H."/>
            <person name="Hsu J.L."/>
            <person name="Reed R."/>
        </authorList>
    </citation>
    <scope>FUNCTION</scope>
    <scope>SUBCELLULAR LOCATION</scope>
    <scope>INTERACTION WITH EIF3B</scope>
    <scope>ASSOCIATION WITH THE EIF-3 COMPLEX</scope>
</reference>
<reference key="23">
    <citation type="journal article" date="2008" name="Oncogene">
        <title>Candidate tumor suppressor DDX3 RNA helicase specifically represses cap-dependent translation by acting as an eIF4E inhibitory protein.</title>
        <authorList>
            <person name="Shih J.W."/>
            <person name="Tsai T.Y."/>
            <person name="Chao C.H."/>
            <person name="Wu Lee Y.H."/>
        </authorList>
    </citation>
    <scope>FUNCTION</scope>
    <scope>INTERACTION WITH EIF4E</scope>
    <scope>MUTAGENESIS OF TYR-38; LEU-43; GLU-348 AND 382-SER--THR-384</scope>
</reference>
<reference key="24">
    <citation type="journal article" date="2008" name="Oncogene">
        <title>Oncogenic role of DDX3 in breast cancer biogenesis.</title>
        <authorList>
            <person name="Botlagunta M."/>
            <person name="Vesuna F."/>
            <person name="Mironchik Y."/>
            <person name="Raman A."/>
            <person name="Lisok A."/>
            <person name="Winnard P. Jr."/>
            <person name="Mukadam S."/>
            <person name="Van Diest P."/>
            <person name="Chen J.H."/>
            <person name="Farabaugh P."/>
            <person name="Patel A.H."/>
            <person name="Raman V."/>
        </authorList>
    </citation>
    <scope>FUNCTION</scope>
</reference>
<reference key="25">
    <citation type="journal article" date="2008" name="Proc. Natl. Acad. Sci. U.S.A.">
        <title>A quantitative atlas of mitotic phosphorylation.</title>
        <authorList>
            <person name="Dephoure N."/>
            <person name="Zhou C."/>
            <person name="Villen J."/>
            <person name="Beausoleil S.A."/>
            <person name="Bakalarski C.E."/>
            <person name="Elledge S.J."/>
            <person name="Gygi S.P."/>
        </authorList>
    </citation>
    <scope>PHOSPHORYLATION [LARGE SCALE ANALYSIS] AT SER-612</scope>
    <scope>IDENTIFICATION BY MASS SPECTROMETRY [LARGE SCALE ANALYSIS]</scope>
    <source>
        <tissue>Cervix carcinoma</tissue>
    </source>
</reference>
<reference key="26">
    <citation type="journal article" date="2009" name="RNA">
        <title>Control of c-myc mRNA stability by IGF2BP1-associated cytoplasmic RNPs.</title>
        <authorList>
            <person name="Weidensdorfer D."/>
            <person name="Stoehr N."/>
            <person name="Baude A."/>
            <person name="Lederer M."/>
            <person name="Koehn M."/>
            <person name="Schierhorn A."/>
            <person name="Buchmeier S."/>
            <person name="Wahle E."/>
            <person name="Huettelmaiery S."/>
        </authorList>
    </citation>
    <scope>IDENTIFICATION IN AN MRNP COMPLEX</scope>
    <scope>INTERACTION WITH IGF2BP1</scope>
    <scope>IDENTIFICATION BY MASS SPECTROMETRY</scope>
</reference>
<reference key="27">
    <citation type="journal article" date="2009" name="Science">
        <title>Lysine acetylation targets protein complexes and co-regulates major cellular functions.</title>
        <authorList>
            <person name="Choudhary C."/>
            <person name="Kumar C."/>
            <person name="Gnad F."/>
            <person name="Nielsen M.L."/>
            <person name="Rehman M."/>
            <person name="Walther T.C."/>
            <person name="Olsen J.V."/>
            <person name="Mann M."/>
        </authorList>
    </citation>
    <scope>ACETYLATION [LARGE SCALE ANALYSIS] AT LYS-118</scope>
    <scope>IDENTIFICATION BY MASS SPECTROMETRY [LARGE SCALE ANALYSIS]</scope>
</reference>
<reference key="28">
    <citation type="journal article" date="2010" name="Eur. J. Immunol.">
        <title>DEAD/H BOX 3 (DDX3) helicase binds the RIG-I adaptor IPS-1 to up-regulate IFN-beta-inducing potential.</title>
        <authorList>
            <person name="Oshiumi H."/>
            <person name="Sakai K."/>
            <person name="Matsumoto M."/>
            <person name="Seya T."/>
        </authorList>
    </citation>
    <scope>FUNCTION</scope>
    <scope>INTERACTION WITH IFIH1; MAVS AND RIGI</scope>
    <scope>SUBCELLULAR LOCATION</scope>
</reference>
<reference key="29">
    <citation type="journal article" date="2010" name="J. Gen. Virol.">
        <title>Hepatitis B virus polymerase inhibits RIG-I- and Toll-like receptor 3-mediated beta interferon induction in human hepatocytes through interference with interferon regulatory factor 3 activation and dampening of the interaction between TBK1/IKKepsilon and DDX3.</title>
        <authorList>
            <person name="Yu S."/>
            <person name="Chen J."/>
            <person name="Wu M."/>
            <person name="Chen H."/>
            <person name="Kato N."/>
            <person name="Yuan Z."/>
        </authorList>
    </citation>
    <scope>FUNCTION</scope>
    <scope>INTERACTION WITH TBK1</scope>
    <scope>INTERACTION WITH HEPATITIS B VIRUS POLYMERASE (MICROBIAL INFECTION)</scope>
</reference>
<reference key="30">
    <citation type="journal article" date="2010" name="Mol. Cell. Biol.">
        <title>DDX3 regulates cell growth through translational control of cyclin E1.</title>
        <authorList>
            <person name="Lai M.C."/>
            <person name="Chang W.C."/>
            <person name="Shieh S.Y."/>
            <person name="Tarn W.Y."/>
        </authorList>
    </citation>
    <scope>FUNCTION</scope>
    <scope>MUTAGENESIS OF SER-382</scope>
</reference>
<reference key="31">
    <citation type="journal article" date="2010" name="PLoS ONE">
        <title>Hepatitis C virus core protein abrogates the DDX3 function that enhances IPS-1-mediated IFN-beta induction.</title>
        <authorList>
            <person name="Oshiumi H."/>
            <person name="Ikeda M."/>
            <person name="Matsumoto M."/>
            <person name="Watanabe A."/>
            <person name="Takeuchi O."/>
            <person name="Akira S."/>
            <person name="Kato N."/>
            <person name="Shimotohno K."/>
            <person name="Seya T."/>
        </authorList>
    </citation>
    <scope>FUNCTION</scope>
    <scope>FUNCTION (MICROBIAL INFECTION)</scope>
    <scope>RNA-BINDING</scope>
    <scope>INTERACTION WITH MAVS</scope>
    <scope>SUBCELLULAR LOCATION</scope>
</reference>
<reference key="32">
    <citation type="journal article" date="2010" name="PLoS Pathog.">
        <title>Hepatitis B virus polymerase blocks pattern recognition receptor signaling via interaction with DDX3: implications for immune evasion.</title>
        <authorList>
            <person name="Wang H."/>
            <person name="Ryu W.S."/>
        </authorList>
    </citation>
    <scope>FUNCTION</scope>
    <scope>INTERACTION WITH IKBKE</scope>
    <scope>INTERACTION WITH HEPATITIS B VIRUS POLYMERASE (MICROBIAL INFECTION)</scope>
</reference>
<reference key="33">
    <citation type="journal article" date="2010" name="Sci. Signal.">
        <title>Quantitative phosphoproteomics reveals widespread full phosphorylation site occupancy during mitosis.</title>
        <authorList>
            <person name="Olsen J.V."/>
            <person name="Vermeulen M."/>
            <person name="Santamaria A."/>
            <person name="Kumar C."/>
            <person name="Miller M.L."/>
            <person name="Jensen L.J."/>
            <person name="Gnad F."/>
            <person name="Cox J."/>
            <person name="Jensen T.S."/>
            <person name="Nigg E.A."/>
            <person name="Brunak S."/>
            <person name="Mann M."/>
        </authorList>
    </citation>
    <scope>ACETYLATION [LARGE SCALE ANALYSIS] AT SER-2</scope>
    <scope>CLEAVAGE OF INITIATOR METHIONINE [LARGE SCALE ANALYSIS]</scope>
    <scope>IDENTIFICATION BY MASS SPECTROMETRY [LARGE SCALE ANALYSIS]</scope>
    <source>
        <tissue>Cervix carcinoma</tissue>
    </source>
</reference>
<reference key="34">
    <citation type="journal article" date="2011" name="BMC Syst. Biol.">
        <title>Initial characterization of the human central proteome.</title>
        <authorList>
            <person name="Burkard T.R."/>
            <person name="Planyavsky M."/>
            <person name="Kaupe I."/>
            <person name="Breitwieser F.P."/>
            <person name="Buerckstuemmer T."/>
            <person name="Bennett K.L."/>
            <person name="Superti-Furga G."/>
            <person name="Colinge J."/>
        </authorList>
    </citation>
    <scope>IDENTIFICATION BY MASS SPECTROMETRY [LARGE SCALE ANALYSIS]</scope>
</reference>
<reference key="35">
    <citation type="journal article" date="2011" name="PLoS ONE">
        <title>A motif unique to the human DEAD-box protein DDX3 is important for nucleic acid binding, ATP hydrolysis, RNA/DNA unwinding and HIV-1 replication.</title>
        <authorList>
            <person name="Garbelli A."/>
            <person name="Beermann S."/>
            <person name="Di Cicco G."/>
            <person name="Dietrich U."/>
            <person name="Maga G."/>
        </authorList>
    </citation>
    <scope>FUNCTION</scope>
    <scope>FUNCTION (MICROBIAL INFECTION)</scope>
    <scope>CATALYTIC ACTIVITY</scope>
    <scope>BIOPHYSICOCHEMICAL PROPERTIES</scope>
    <scope>MUTAGENESIS OF LYS-230 AND 347-ASP--ASP-350</scope>
</reference>
<reference key="36">
    <citation type="journal article" date="2011" name="Proc. Natl. Acad. Sci. U.S.A.">
        <title>DEAD-box RNA helicase Belle/DDX3 and the RNA interference pathway promote mitotic chromosome segregation.</title>
        <authorList>
            <person name="Pek J.W."/>
            <person name="Kai T."/>
        </authorList>
    </citation>
    <scope>FUNCTION</scope>
    <scope>INTERACTION WITH NCAPH</scope>
    <scope>SUBCELLULAR LOCATION</scope>
</reference>
<reference key="37">
    <citation type="journal article" date="2011" name="Sci. Signal.">
        <title>System-wide temporal characterization of the proteome and phosphoproteome of human embryonic stem cell differentiation.</title>
        <authorList>
            <person name="Rigbolt K.T."/>
            <person name="Prokhorova T.A."/>
            <person name="Akimov V."/>
            <person name="Henningsen J."/>
            <person name="Johansen P.T."/>
            <person name="Kratchmarova I."/>
            <person name="Kassem M."/>
            <person name="Mann M."/>
            <person name="Olsen J.V."/>
            <person name="Blagoev B."/>
        </authorList>
    </citation>
    <scope>PHOSPHORYLATION [LARGE SCALE ANALYSIS] AT SER-131</scope>
    <scope>IDENTIFICATION BY MASS SPECTROMETRY [LARGE SCALE ANALYSIS]</scope>
</reference>
<reference key="38">
    <citation type="journal article" date="2012" name="Biochem. J.">
        <title>Critical roles of RNA helicase DDX3 and its interactions with eIF4E/PABP1 in stress granule assembly and stress response.</title>
        <authorList>
            <person name="Shih J.W."/>
            <person name="Wang W.T."/>
            <person name="Tsai T.Y."/>
            <person name="Kuo C.Y."/>
            <person name="Li H.K."/>
            <person name="Wu Lee Y.H."/>
        </authorList>
    </citation>
    <scope>FUNCTION</scope>
    <scope>SUBCELLULAR LOCATION</scope>
    <scope>INTERACTION WITH EIF4E AND PABPC1</scope>
    <scope>MUTAGENESIS OF LEU-43; GLU-348 AND 382-SER--THR-384</scope>
</reference>
<reference key="39">
    <citation type="journal article" date="2012" name="J. Cell. Biochem.">
        <title>The DEAD-box RNA helicase DDX3 interacts with DDX5, co-localizes with it in the cytoplasm during the G2/M phase of the cycle, and affects its shuttling during mRNP export.</title>
        <authorList>
            <person name="Choi Y.J."/>
            <person name="Lee S.G."/>
        </authorList>
    </citation>
    <scope>SUBCELLULAR LOCATION</scope>
    <scope>INTERACTION WITH DDX5</scope>
    <scope>PHOSPHORYLATION</scope>
</reference>
<reference key="40">
    <citation type="journal article" date="2012" name="Mol. Cell. Proteomics">
        <title>Comparative large-scale characterisation of plant vs. mammal proteins reveals similar and idiosyncratic N-alpha acetylation features.</title>
        <authorList>
            <person name="Bienvenut W.V."/>
            <person name="Sumpton D."/>
            <person name="Martinez A."/>
            <person name="Lilla S."/>
            <person name="Espagne C."/>
            <person name="Meinnel T."/>
            <person name="Giglione C."/>
        </authorList>
    </citation>
    <scope>ACETYLATION [LARGE SCALE ANALYSIS] AT SER-2</scope>
    <scope>CLEAVAGE OF INITIATOR METHIONINE [LARGE SCALE ANALYSIS]</scope>
    <scope>IDENTIFICATION BY MASS SPECTROMETRY [LARGE SCALE ANALYSIS]</scope>
</reference>
<reference key="41">
    <citation type="journal article" date="2012" name="Nucleic Acids Res.">
        <title>The DEAD-box helicase DDX3 supports the assembly of functional 80S ribosomes.</title>
        <authorList>
            <person name="Geissler R."/>
            <person name="Golbik R.P."/>
            <person name="Behrens S.E."/>
        </authorList>
    </citation>
    <scope>FUNCTION</scope>
    <scope>ASSOCIATION WITH THE RIBOSOME SMALL SUBUNIT</scope>
    <scope>INTERACTION WITH EIF2S1; EIF3C AND IGF2BP1/2</scope>
    <scope>ASSOCIATION WITH THE EIF-3 COMPLEX</scope>
    <scope>MUTAGENESIS OF TYR-200; GLN-207; LYS-230; ASP-347 AND GLU-348</scope>
</reference>
<reference key="42">
    <citation type="journal article" date="2012" name="EMBO J.">
        <title>DEAD-box protein DDX3 associates with eIF4F to promote translation of selected mRNAs.</title>
        <authorList>
            <person name="Soto-Rifo R."/>
            <person name="Rubilar P.S."/>
            <person name="Limousin T."/>
            <person name="de Breyne S."/>
            <person name="Decimo D."/>
            <person name="Ohlmann T."/>
        </authorList>
    </citation>
    <scope>FUNCTION</scope>
    <scope>FUNCTION (MICROBIAL INFECTION)</scope>
    <scope>RNA-BINDING</scope>
    <scope>INTERACTION WITH EIF4G1 AND PABPC1</scope>
    <scope>SUBCELLULAR LOCATION</scope>
    <scope>MUTAGENESIS OF TYR-38; LEU-43; GLN-207; LYS-230; GLU-348 AND SER-382</scope>
</reference>
<reference key="43">
    <citation type="journal article" date="2013" name="J. Proteome Res.">
        <title>Toward a comprehensive characterization of a human cancer cell phosphoproteome.</title>
        <authorList>
            <person name="Zhou H."/>
            <person name="Di Palma S."/>
            <person name="Preisinger C."/>
            <person name="Peng M."/>
            <person name="Polat A.N."/>
            <person name="Heck A.J."/>
            <person name="Mohammed S."/>
        </authorList>
    </citation>
    <scope>PHOSPHORYLATION [LARGE SCALE ANALYSIS] AT SER-82; SER-86; SER-90; SER-594 AND SER-605</scope>
    <scope>IDENTIFICATION BY MASS SPECTROMETRY [LARGE SCALE ANALYSIS]</scope>
    <source>
        <tissue>Cervix carcinoma</tissue>
        <tissue>Erythroleukemia</tissue>
    </source>
</reference>
<reference key="44">
    <citation type="journal article" date="2013" name="Mol. Cell. Biol.">
        <title>Human DEAD box helicase 3 couples IkappaB kinase epsilon to interferon regulatory factor 3 activation.</title>
        <authorList>
            <person name="Gu L."/>
            <person name="Fullam A."/>
            <person name="Brennan R."/>
            <person name="Schroder M."/>
        </authorList>
    </citation>
    <scope>FUNCTION</scope>
    <scope>INTERACTION WITH IKBKE AND IRF3</scope>
    <scope>PHOSPHORYLATION AT SER-102</scope>
    <scope>MUTAGENESIS OF SER-71; 82-SER-SER-83; SER-102 AND SER-152</scope>
</reference>
<reference key="45">
    <citation type="journal article" date="2013" name="Science">
        <title>RNA helicase DDX3 is a regulatory subunit of casein kinase 1 in Wnt-beta-catenin signaling.</title>
        <authorList>
            <person name="Cruciat C.M."/>
            <person name="Dolde C."/>
            <person name="de Groot R.E."/>
            <person name="Ohkawara B."/>
            <person name="Reinhard C."/>
            <person name="Korswagen H.C."/>
            <person name="Niehrs C."/>
        </authorList>
    </citation>
    <scope>FUNCTION</scope>
    <scope>INTERACTION WITH CSNK1E</scope>
    <scope>SUBCELLULAR LOCATION</scope>
    <scope>MUTAGENESIS OF GLU-348 AND 382-SER--THR-384</scope>
</reference>
<reference key="46">
    <citation type="journal article" date="2014" name="J. Proteomics">
        <title>An enzyme assisted RP-RPLC approach for in-depth analysis of human liver phosphoproteome.</title>
        <authorList>
            <person name="Bian Y."/>
            <person name="Song C."/>
            <person name="Cheng K."/>
            <person name="Dong M."/>
            <person name="Wang F."/>
            <person name="Huang J."/>
            <person name="Sun D."/>
            <person name="Wang L."/>
            <person name="Ye M."/>
            <person name="Zou H."/>
        </authorList>
    </citation>
    <scope>PHOSPHORYLATION [LARGE SCALE ANALYSIS] AT SER-183</scope>
    <scope>IDENTIFICATION BY MASS SPECTROMETRY [LARGE SCALE ANALYSIS]</scope>
    <source>
        <tissue>Liver</tissue>
    </source>
</reference>
<reference key="47">
    <citation type="journal article" date="2014" name="Mol. Cell. Proteomics">
        <title>Immunoaffinity enrichment and mass spectrometry analysis of protein methylation.</title>
        <authorList>
            <person name="Guo A."/>
            <person name="Gu H."/>
            <person name="Zhou J."/>
            <person name="Mulhern D."/>
            <person name="Wang Y."/>
            <person name="Lee K.A."/>
            <person name="Yang V."/>
            <person name="Aguiar M."/>
            <person name="Kornhauser J."/>
            <person name="Jia X."/>
            <person name="Ren J."/>
            <person name="Beausoleil S.A."/>
            <person name="Silva J.C."/>
            <person name="Vemulapalli V."/>
            <person name="Bedford M.T."/>
            <person name="Comb M.J."/>
        </authorList>
    </citation>
    <scope>METHYLATION [LARGE SCALE ANALYSIS] AT ARG-592; ARG-617 AND ARG-632</scope>
    <scope>IDENTIFICATION BY MASS SPECTROMETRY [LARGE SCALE ANALYSIS]</scope>
    <source>
        <tissue>Colon carcinoma</tissue>
    </source>
</reference>
<reference key="48">
    <citation type="journal article" date="2014" name="Nat. Struct. Mol. Biol.">
        <title>Uncovering global SUMOylation signaling networks in a site-specific manner.</title>
        <authorList>
            <person name="Hendriks I.A."/>
            <person name="D'Souza R.C."/>
            <person name="Yang B."/>
            <person name="Verlaan-de Vries M."/>
            <person name="Mann M."/>
            <person name="Vertegaal A.C."/>
        </authorList>
    </citation>
    <scope>SUMOYLATION [LARGE SCALE ANALYSIS] AT LYS-215</scope>
    <scope>IDENTIFICATION BY MASS SPECTROMETRY [LARGE SCALE ANALYSIS]</scope>
</reference>
<reference key="49">
    <citation type="journal article" date="2015" name="Mol. Cell. Biol.">
        <title>The DHX33 RNA Helicase Promotes mRNA Translation Initiation.</title>
        <authorList>
            <person name="Zhang Y."/>
            <person name="You J."/>
            <person name="Wang X."/>
            <person name="Weber J."/>
        </authorList>
    </citation>
    <scope>INTERACTION WITH DHX33</scope>
</reference>
<reference key="50">
    <citation type="journal article" date="2015" name="PLoS ONE">
        <title>Identification of Novel Proteins Co-Purifying with Cockayne Syndrome Group B (CSB) Reveals Potential Roles for CSB in RNA Metabolism and Chromatin Dynamics.</title>
        <authorList>
            <person name="Nicolai S."/>
            <person name="Filippi S."/>
            <person name="Caputo M."/>
            <person name="Cipak L."/>
            <person name="Gregan J."/>
            <person name="Ammerer G."/>
            <person name="Frontini M."/>
            <person name="Willems D."/>
            <person name="Prantera G."/>
            <person name="Balajee A.S."/>
            <person name="Proietti-De-Santis L."/>
        </authorList>
    </citation>
    <scope>INTERACTION WITH ERCC6</scope>
</reference>
<reference key="51">
    <citation type="journal article" date="2015" name="Proteomics">
        <title>N-terminome analysis of the human mitochondrial proteome.</title>
        <authorList>
            <person name="Vaca Jacome A.S."/>
            <person name="Rabilloud T."/>
            <person name="Schaeffer-Reiss C."/>
            <person name="Rompais M."/>
            <person name="Ayoub D."/>
            <person name="Lane L."/>
            <person name="Bairoch A."/>
            <person name="Van Dorsselaer A."/>
            <person name="Carapito C."/>
        </authorList>
    </citation>
    <scope>IDENTIFICATION BY MASS SPECTROMETRY [LARGE SCALE ANALYSIS]</scope>
</reference>
<reference key="52">
    <citation type="journal article" date="2016" name="Mol. Cell">
        <title>RNA remodeling activity of DEAD box proteins tuned by protein concentration, RNA length, and ATP.</title>
        <authorList>
            <person name="Kim Y."/>
            <person name="Myong S."/>
        </authorList>
    </citation>
    <scope>HOMOOLIGOMERIZATION</scope>
</reference>
<reference key="53">
    <citation type="journal article" date="2016" name="Antiviral Res.">
        <title>Venezuelan equine encephalitis virus non-structural protein 3 (nsP3) interacts with RNA helicases DDX1 and DDX3 in infected cells.</title>
        <authorList>
            <person name="Amaya M."/>
            <person name="Brooks-Faulconer T."/>
            <person name="Lark T."/>
            <person name="Keck F."/>
            <person name="Bailey C."/>
            <person name="Raman V."/>
            <person name="Narayanan A."/>
        </authorList>
    </citation>
    <scope>FUNCTION (MICROBIAL INFECTION)</scope>
    <scope>INTERACTION WITH VENEZUELAN EQUINE ENCEPHALITIS VIRUS NON-STRUCTURAL PROTEIN 3 (MICROBIAL INFECTION)</scope>
    <scope>SUBCELLULAR LOCATION</scope>
</reference>
<reference key="54">
    <citation type="journal article" date="2016" name="PLoS ONE">
        <title>The DEAD-Box RNA Helicase DDX3 Interacts with NF-kappaB Subunit p65 and Suppresses p65-Mediated Transcription.</title>
        <authorList>
            <person name="Xiang N."/>
            <person name="He M."/>
            <person name="Ishaq M."/>
            <person name="Gao Y."/>
            <person name="Song F."/>
            <person name="Guo L."/>
            <person name="Ma L."/>
            <person name="Sun G."/>
            <person name="Liu D."/>
            <person name="Guo D."/>
            <person name="Chen Y."/>
        </authorList>
    </citation>
    <scope>FUNCTION</scope>
    <scope>INTERACTION WITH RELA</scope>
    <scope>SUBCELLULAR LOCATION</scope>
    <scope>MUTAGENESIS OF LYS-230 AND 275-THR--GLU-277</scope>
</reference>
<reference key="55">
    <citation type="journal article" date="2017" name="Biochem. J.">
        <title>DDX3 directly regulates TRAF3 ubiquitination and acts as a scaffold to co-ordinate assembly of signalling complexes downstream from MAVS.</title>
        <authorList>
            <person name="Gu L."/>
            <person name="Fullam A."/>
            <person name="McCormack N."/>
            <person name="Hoehn Y."/>
            <person name="Schroeder M."/>
        </authorList>
    </citation>
    <scope>FUNCTION</scope>
    <scope>INTERACTION WITH IKBKE; IRF3; MAVS; TBKBP1 AND TRAF3</scope>
    <scope>MUTAGENESIS OF 142-PRO--GLU-144</scope>
</reference>
<reference key="56">
    <citation type="journal article" date="2017" name="Biochem. J.">
        <title>The helicase, DDX3X, interacts with poly(A)-binding protein 1 (PABP1) and caprin-1 at the leading edge of migrating fibroblasts and is required for efficient cell spreading.</title>
        <authorList>
            <person name="Copsey A.C."/>
            <person name="Cooper S."/>
            <person name="Parker R."/>
            <person name="Lineham E."/>
            <person name="Lapworth C."/>
            <person name="Jallad D."/>
            <person name="Sweet S."/>
            <person name="Morley S.J."/>
        </authorList>
    </citation>
    <scope>INTERACTION WITH CAPRIN1; EIF4E AND PABPC1</scope>
    <scope>SUBCELLULAR LOCATION</scope>
</reference>
<reference key="57">
    <citation type="journal article" date="2017" name="Nat. Struct. Mol. Biol.">
        <title>Site-specific mapping of the human SUMO proteome reveals co-modification with phosphorylation.</title>
        <authorList>
            <person name="Hendriks I.A."/>
            <person name="Lyon D."/>
            <person name="Young C."/>
            <person name="Jensen L.J."/>
            <person name="Vertegaal A.C."/>
            <person name="Nielsen M.L."/>
        </authorList>
    </citation>
    <scope>SUMOYLATION [LARGE SCALE ANALYSIS] AT LYS-215</scope>
    <scope>IDENTIFICATION BY MASS SPECTROMETRY [LARGE SCALE ANALYSIS]</scope>
</reference>
<reference key="58">
    <citation type="journal article" date="2017" name="Sci. Rep.">
        <title>DDX3 localizes to the centrosome and prevents multipolar mitosis by epigenetically and translationally modulating p53 expression.</title>
        <authorList>
            <person name="Chen W.J."/>
            <person name="Wang W.T."/>
            <person name="Tsai T.Y."/>
            <person name="Li H.K."/>
            <person name="Lee Y.W."/>
        </authorList>
    </citation>
    <scope>FUNCTION</scope>
    <scope>INTERACTION WITH TP53 AND GAMMA-TUBULIN</scope>
    <scope>SUBCELLULAR LOCATION</scope>
</reference>
<reference key="59">
    <citation type="journal article" date="2017" name="Sci. Rep.">
        <title>DDX3 regulates endoplasmic reticulum stress-induced ATF4 expression.</title>
        <authorList>
            <person name="Adjibade P."/>
            <person name="Grenier St-Sauveur V."/>
            <person name="Bergeman J."/>
            <person name="Huot M.E."/>
            <person name="Khandjian E.W."/>
            <person name="Mazroui R."/>
        </authorList>
    </citation>
    <scope>FUNCTION</scope>
    <scope>SUBCELLULAR LOCATION</scope>
    <scope>ASSOCIATION WITH EIF4F COMPLEX</scope>
</reference>
<reference key="60">
    <citation type="journal article" date="2017" name="Sci. Rep.">
        <title>RNA helicase DDX3 maintains lipid homeostasis through upregulation of the microsomal triglyceride transfer protein by interacting with HNF4 and SHP.</title>
        <authorList>
            <person name="Tsai T.Y."/>
            <person name="Wang W.T."/>
            <person name="Li H.K."/>
            <person name="Chen W.J."/>
            <person name="Tsai Y.H."/>
            <person name="Chao C.H."/>
            <person name="Wu Lee Y.H."/>
        </authorList>
    </citation>
    <scope>FUNCTION</scope>
    <scope>INTERACTION WITH CREBBP; EP300; HNF4A AND NR0B2</scope>
    <scope>MUTAGENESIS OF GLU-348 AND 382-SER--THR-384</scope>
</reference>
<reference key="61">
    <citation type="journal article" date="2018" name="Biochem. J.">
        <title>DDX3 directly facilitates IKKalpha activation and regulates downstream signalling pathways.</title>
        <authorList>
            <person name="Fullam A."/>
            <person name="Gu L."/>
            <person name="Hoehn Y."/>
            <person name="Schroeder M."/>
        </authorList>
    </citation>
    <scope>FUNCTION</scope>
    <scope>INTERACTION WITH MAP3K14 AND CHUK</scope>
    <scope>SUBCELLULAR LOCATION</scope>
</reference>
<reference key="62">
    <citation type="journal article" date="2018" name="Eur. J. Cell Biol.">
        <title>Investigating nucleo-cytoplasmic shuttling of the human DEAD-box helicase DDX3.</title>
        <authorList>
            <person name="Brennan R."/>
            <person name="Haap-Hoff A."/>
            <person name="Gu L."/>
            <person name="Gautier V."/>
            <person name="Long A."/>
            <person name="Schroeder M."/>
        </authorList>
    </citation>
    <scope>INTERACTION WITH XPO1</scope>
    <scope>SUBCELLULAR LOCATION</scope>
    <scope>NUCLEAR EXPORT SIGNAL</scope>
    <scope>MUTAGENESIS OF 19-LEU--LEU-21</scope>
</reference>
<reference key="63">
    <citation type="journal article" date="2018" name="J. Cell Sci.">
        <title>A CK1 FRET biosensor reveals that DDX3X is an essential activator of CK1epsilon.</title>
        <authorList>
            <person name="Dolde C."/>
            <person name="Bischof J."/>
            <person name="Grueter S."/>
            <person name="Montada A."/>
            <person name="Halekotte J."/>
            <person name="Peifer C."/>
            <person name="Kalbacher H."/>
            <person name="Baumann U."/>
            <person name="Knippschild U."/>
            <person name="Suter B."/>
        </authorList>
    </citation>
    <scope>FUNCTION</scope>
    <scope>INTERACTION WITH CSNK1E AND CSNK1D</scope>
    <scope>SUBCELLULAR LOCATION</scope>
    <scope>PHOSPHORYLATION AT SER-429; THR-469; SER-470 AND SER-543</scope>
    <scope>CHARACTERIZATION OF VARIANTS MEDULLOBLASTOMA CYS-376 AND HIS-528</scope>
</reference>
<reference key="64">
    <citation type="journal article" date="2018" name="Nat. Commun.">
        <title>The TRPV4 channel links calcium influx to DDX3X activity and viral infectivity.</title>
        <authorList>
            <person name="Donate-Macian P."/>
            <person name="Jungfleisch J."/>
            <person name="Perez-Vilaro G."/>
            <person name="Rubio-Moscardo F."/>
            <person name="Peralvarez-Marin A."/>
            <person name="Diez J."/>
            <person name="Valverde M.A."/>
        </authorList>
    </citation>
    <scope>FUNCTION (MICROBIAL INFECTION)</scope>
    <scope>INTERACTION WITH TRPV4</scope>
    <scope>SUBCELLULAR LOCATION</scope>
</reference>
<reference key="65">
    <citation type="journal article" date="2018" name="Nucleic Acids Res.">
        <title>Analysis of NRAS RNA G-quadruplex binding proteins reveals DDX3X as a novel interactor of cellular G-quadruplex containing transcripts.</title>
        <authorList>
            <person name="Herdy B."/>
            <person name="Mayer C."/>
            <person name="Varshney D."/>
            <person name="Marsico G."/>
            <person name="Murat P."/>
            <person name="Taylor C."/>
            <person name="D'Santos C."/>
            <person name="Tannahill D."/>
            <person name="Balasubramanian S."/>
        </authorList>
    </citation>
    <scope>FUNCTION</scope>
</reference>
<reference key="66">
    <citation type="journal article" date="2019" name="Cells">
        <title>Exportin-1-Dependent Nuclear Export of DEAD-box Helicase DDX3X is Central to its Role in Antiviral Immunity.</title>
        <authorList>
            <person name="Heaton S.M."/>
            <person name="Atkinson S.C."/>
            <person name="Sweeney M.N."/>
            <person name="Yang S.N.Y."/>
            <person name="Jans D.A."/>
            <person name="Borg N.A."/>
        </authorList>
    </citation>
    <scope>FUNCTION</scope>
    <scope>CATALYTIC ACTIVITY</scope>
    <scope>INTERACTION WITH XPO1</scope>
    <scope>SUBCELLULAR LOCATION</scope>
    <scope>NUCLEAR EXPORT SIGNAL</scope>
    <scope>DOMAIN</scope>
    <scope>MUTAGENESIS OF 12-LEU--LEU-21</scope>
</reference>
<reference key="67">
    <citation type="journal article" date="2021" name="Sci. Adv.">
        <title>RNF39 mediates K48-linked ubiquitination of DDX3X and inhibits RLR-dependent antiviral immunity.</title>
        <authorList>
            <person name="Wang W."/>
            <person name="Jia M."/>
            <person name="Zhao C."/>
            <person name="Yu Z."/>
            <person name="Song H."/>
            <person name="Qin Y."/>
            <person name="Zhao W."/>
        </authorList>
    </citation>
    <scope>FUNCTION</scope>
    <scope>SUBCELLULAR LOCATION</scope>
    <scope>UBIQUITINATION BY RNF39</scope>
    <scope>MUTAGENESIS OF LYS-55; LYS-138 AND LYS-162</scope>
</reference>
<reference key="68">
    <citation type="journal article" date="2007" name="Acta Crystallogr. F">
        <title>Expression, purification, crystallization and preliminary X-ray diffraction analysis of the DDX3 RNA helicase domain.</title>
        <authorList>
            <person name="Rodamilans B."/>
            <person name="Montoya G."/>
        </authorList>
    </citation>
    <scope>X-RAY CRYSTALLOGRAPHY (1.91 ANGSTROMS) OF 409-580</scope>
</reference>
<reference key="69">
    <citation type="journal article" date="2007" name="J. Mol. Biol.">
        <title>Crystal structure of conserved domains 1 and 2 of the human DEAD-box helicase DDX3X in complex with the mononucleotide AMP.</title>
        <authorList>
            <person name="Hoegbom M."/>
            <person name="Collins R."/>
            <person name="van den Berg S."/>
            <person name="Jenvert R.-M."/>
            <person name="Karlberg T."/>
            <person name="Kotenyova T."/>
            <person name="Flores A."/>
            <person name="Karlsson Hedestam G.B."/>
            <person name="Schiavone L.H."/>
        </authorList>
    </citation>
    <scope>X-RAY CRYSTALLOGRAPHY (2.2 ANGSTROMS) OF 168-582 IN COMPLEX WITH AMP</scope>
</reference>
<reference key="70">
    <citation type="journal article" date="2009" name="Structure">
        <title>Structural basis for targeting of human RNA helicase DDX3 by poxvirus protein K7.</title>
        <authorList>
            <person name="Oda S."/>
            <person name="Schroder M."/>
            <person name="Khan A.R."/>
        </authorList>
    </citation>
    <scope>X-RAY CRYSTALLOGRAPHY (1.6 ANGSTROMS) OF 71-90 IN COMPLEX WITH VACV PROTEIN K7 (MICROBIAL INFECTION)</scope>
    <scope>FUNCTION</scope>
    <scope>MUTAGENESIS OF 84-PHE-PHE-85</scope>
</reference>
<reference evidence="65" key="71">
    <citation type="journal article" date="2019" name="Nat. Commun.">
        <title>The mechanism of RNA duplex recognition and unwinding by DEAD-box helicase DDX3X.</title>
        <authorList>
            <person name="Song H."/>
            <person name="Ji X."/>
        </authorList>
    </citation>
    <scope>X-RAY CRYSTALLOGRAPHY (2.50 ANGSTROMS) OF 132-607 IN COMPLEX WITH DSRNA</scope>
    <scope>HOMODIMERIZATION</scope>
    <scope>CATALYTIC ACTIVITY</scope>
</reference>
<reference key="72">
    <citation type="journal article" date="2006" name="Science">
        <title>The consensus coding sequences of human breast and colorectal cancers.</title>
        <authorList>
            <person name="Sjoeblom T."/>
            <person name="Jones S."/>
            <person name="Wood L.D."/>
            <person name="Parsons D.W."/>
            <person name="Lin J."/>
            <person name="Barber T.D."/>
            <person name="Mandelker D."/>
            <person name="Leary R.J."/>
            <person name="Ptak J."/>
            <person name="Silliman N."/>
            <person name="Szabo S."/>
            <person name="Buckhaults P."/>
            <person name="Farrell C."/>
            <person name="Meeh P."/>
            <person name="Markowitz S.D."/>
            <person name="Willis J."/>
            <person name="Dawson D."/>
            <person name="Willson J.K.V."/>
            <person name="Gazdar A.F."/>
            <person name="Hartigan J."/>
            <person name="Wu L."/>
            <person name="Liu C."/>
            <person name="Parmigiani G."/>
            <person name="Park B.H."/>
            <person name="Bachman K.E."/>
            <person name="Papadopoulos N."/>
            <person name="Vogelstein B."/>
            <person name="Kinzler K.W."/>
            <person name="Velculescu V.E."/>
        </authorList>
    </citation>
    <scope>VARIANT [LARGE SCALE ANALYSIS] THR-294</scope>
</reference>
<reference key="73">
    <citation type="journal article" date="2015" name="Am. J. Hum. Genet.">
        <title>Mutations in DDX3X are a common cause of unexplained intellectual disability with gender-specific effects on Wnt signaling.</title>
        <authorList>
            <consortium name="DDD Study"/>
            <person name="Snijders Blok L."/>
            <person name="Madsen E."/>
            <person name="Juusola J."/>
            <person name="Gilissen C."/>
            <person name="Baralle D."/>
            <person name="Reijnders M.R."/>
            <person name="Venselaar H."/>
            <person name="Helsmoortel C."/>
            <person name="Cho M.T."/>
            <person name="Hoischen A."/>
            <person name="Vissers L.E."/>
            <person name="Koemans T.S."/>
            <person name="Wissink-Lindhout W."/>
            <person name="Eichler E.E."/>
            <person name="Romano C."/>
            <person name="Van Esch H."/>
            <person name="Stumpel C."/>
            <person name="Vreeburg M."/>
            <person name="Smeets E."/>
            <person name="Oberndorff K."/>
            <person name="van Bon B.W."/>
            <person name="Shaw M."/>
            <person name="Gecz J."/>
            <person name="Haan E."/>
            <person name="Bienek M."/>
            <person name="Jensen C."/>
            <person name="Loeys B.L."/>
            <person name="Van Dijck A."/>
            <person name="Innes A.M."/>
            <person name="Racher H."/>
            <person name="Vermeer S."/>
            <person name="Di Donato N."/>
            <person name="Rump A."/>
            <person name="Tatton-Brown K."/>
            <person name="Parker M.J."/>
            <person name="Henderson A."/>
            <person name="Lynch S.A."/>
            <person name="Fryer A."/>
            <person name="Ross A."/>
            <person name="Vasudevan P."/>
            <person name="Kini U."/>
            <person name="Newbury-Ecob R."/>
            <person name="Chandler K."/>
            <person name="Male A."/>
            <person name="Dijkstra S."/>
            <person name="Schieving J."/>
            <person name="Giltay J."/>
            <person name="van Gassen K.L."/>
            <person name="Schuurs-Hoeijmakers J."/>
            <person name="Tan P.L."/>
            <person name="Pediaditakis I."/>
            <person name="Haas S.A."/>
            <person name="Retterer K."/>
            <person name="Reed P."/>
            <person name="Monaghan K.G."/>
            <person name="Haverfield E."/>
            <person name="Natowicz M."/>
            <person name="Myers A."/>
            <person name="Kruer M.C."/>
            <person name="Stein Q."/>
            <person name="Strauss K.A."/>
            <person name="Brigatti K.W."/>
            <person name="Keating K."/>
            <person name="Burton B.K."/>
            <person name="Kim K.H."/>
            <person name="Charrow J."/>
            <person name="Norman J."/>
            <person name="Foster-Barber A."/>
            <person name="Kline A.D."/>
            <person name="Kimball A."/>
            <person name="Zackai E."/>
            <person name="Harr M."/>
            <person name="Fox J."/>
            <person name="McLaughlin J."/>
            <person name="Lindstrom K."/>
            <person name="Haude K.M."/>
            <person name="van Roozendaal K."/>
            <person name="Brunner H."/>
            <person name="Chung W.K."/>
            <person name="Kooy R.F."/>
            <person name="Pfundt R."/>
            <person name="Kalscheuer V."/>
            <person name="Mehta S.G."/>
            <person name="Katsanis N."/>
            <person name="Kleefstra T."/>
        </authorList>
    </citation>
    <scope>VARIANTS MRXSSB THR-214; ALA-233 DEL; VAL-233; PRO-235; PHE-300; HIS-326; GLN-351; CYS-362; CYS-376; PRO-392; PRO-417; GLY-475; SER-480; HIS-488; THR-507; ILE-509; THR-514; HIS-534; LEU-560 DEL AND LEU-568</scope>
    <scope>CHARACTERIZATION OF VARIANTS MRXSSB THR-214; HIS-326; CYS-376; THR-507 AND HIS-534</scope>
    <scope>INVOLVEMENT IN MRXSSB</scope>
</reference>
<protein>
    <recommendedName>
        <fullName>ATP-dependent RNA helicase DDX3X</fullName>
        <ecNumber evidence="8 13 29 53 54">3.6.4.13</ecNumber>
    </recommendedName>
    <alternativeName>
        <fullName>CAP-Rf</fullName>
    </alternativeName>
    <alternativeName>
        <fullName>DEAD box protein 3, X-chromosomal</fullName>
    </alternativeName>
    <alternativeName>
        <fullName>DEAD box, X isoform</fullName>
        <shortName>DBX</shortName>
    </alternativeName>
    <alternativeName>
        <fullName>Helicase-like protein 2</fullName>
        <shortName>HLP2</shortName>
    </alternativeName>
</protein>
<sequence length="662" mass="73243">MSHVAVENALGLDQQFAGLDLNSSDNQSGGSTASKGRYIPPHLRNREATKGFYDKDSSGWSSSKDKDAYSSFGSRSDSRGKSSFFSDRGSGSRGRFDDRGRSDYDGIGSRGDRSGFGKFERGGNSRWCDKSDEDDWSKPLPPSERLEQELFSGGNTGINFEKYDDIPVEATGNNCPPHIESFSDVEMGEIIMGNIELTRYTRPTPVQKHAIPIIKEKRDLMACAQTGSGKTAAFLLPILSQIYSDGPGEALRAMKENGRYGRRKQYPISLVLAPTRELAVQIYEEARKFSYRSRVRPCVVYGGADIGQQIRDLERGCHLLVATPGRLVDMMERGKIGLDFCKYLVLDEADRMLDMGFEPQIRRIVEQDTMPPKGVRHTMMFSATFPKEIQMLARDFLDEYIFLAVGRVGSTSENITQKVVWVEESDKRSFLLDLLNATGKDSLTLVFVETKKGADSLEDFLYHEGYACTSIHGDRSQRDREEALHQFRSGKSPILVATAVAARGLDISNVKHVINFDLPSDIEEYVHRIGRTGRVGNLGLATSFFNERNINITKDLLDLLVEAKQEVPSWLENMAYEHHYKGSSRGRSKSSRFSGGFGARDYRQSSGASSSSFSSSRASSSRSGGGGHGSSRGFGGGGYGGFYNSDGYGGNYNSQGVDWWGN</sequence>
<organism>
    <name type="scientific">Homo sapiens</name>
    <name type="common">Human</name>
    <dbReference type="NCBI Taxonomy" id="9606"/>
    <lineage>
        <taxon>Eukaryota</taxon>
        <taxon>Metazoa</taxon>
        <taxon>Chordata</taxon>
        <taxon>Craniata</taxon>
        <taxon>Vertebrata</taxon>
        <taxon>Euteleostomi</taxon>
        <taxon>Mammalia</taxon>
        <taxon>Eutheria</taxon>
        <taxon>Euarchontoglires</taxon>
        <taxon>Primates</taxon>
        <taxon>Haplorrhini</taxon>
        <taxon>Catarrhini</taxon>
        <taxon>Hominidae</taxon>
        <taxon>Homo</taxon>
    </lineage>
</organism>
<name>DDX3X_HUMAN</name>
<feature type="initiator methionine" description="Removed" evidence="6 68 70">
    <location>
        <position position="1"/>
    </location>
</feature>
<feature type="chain" id="PRO_0000055009" description="ATP-dependent RNA helicase DDX3X">
    <location>
        <begin position="2"/>
        <end position="662"/>
    </location>
</feature>
<feature type="domain" description="Helicase ATP-binding" evidence="2">
    <location>
        <begin position="211"/>
        <end position="403"/>
    </location>
</feature>
<feature type="domain" description="Helicase C-terminal" evidence="3">
    <location>
        <begin position="414"/>
        <end position="575"/>
    </location>
</feature>
<feature type="region of interest" description="Required for TBK1 and IKBKE-dependent IFNB1 activation" evidence="20">
    <location>
        <begin position="2"/>
        <end position="139"/>
    </location>
</feature>
<feature type="region of interest" description="Disordered" evidence="4">
    <location>
        <begin position="19"/>
        <end position="144"/>
    </location>
</feature>
<feature type="region of interest" description="Interaction with EIF4E" evidence="14">
    <location>
        <begin position="38"/>
        <end position="44"/>
    </location>
</feature>
<feature type="region of interest" description="Interaction with VACV protein K7" evidence="23">
    <location>
        <begin position="81"/>
        <end position="90"/>
    </location>
</feature>
<feature type="region of interest" description="Involved in binding to RNA G-quadruplex" evidence="51">
    <location>
        <begin position="88"/>
        <end position="123"/>
    </location>
</feature>
<feature type="region of interest" description="Interaction with GSK3B" evidence="21">
    <location>
        <begin position="100"/>
        <end position="662"/>
    </location>
</feature>
<feature type="region of interest" description="Interaction with IKBKE">
    <location>
        <begin position="100"/>
        <end position="110"/>
    </location>
</feature>
<feature type="region of interest" description="Interaction with CHUK" evidence="14">
    <location>
        <begin position="139"/>
        <end position="172"/>
    </location>
</feature>
<feature type="region of interest" description="Involved in stimulation of ATPase activity by DNA and RNA, nucleic acid binding and unwinding and HIV-1 replication">
    <location>
        <begin position="250"/>
        <end position="259"/>
    </location>
</feature>
<feature type="region of interest" description="Interaction with HCV core protein" evidence="5">
    <location>
        <begin position="409"/>
        <end position="662"/>
    </location>
</feature>
<feature type="region of interest" description="Interaction with NXF1" evidence="17">
    <location>
        <begin position="536"/>
        <end position="661"/>
    </location>
</feature>
<feature type="region of interest" description="Disordered" evidence="4">
    <location>
        <begin position="601"/>
        <end position="634"/>
    </location>
</feature>
<feature type="short sequence motif" description="Nuclear export signal" evidence="50 54">
    <location>
        <begin position="12"/>
        <end position="21"/>
    </location>
</feature>
<feature type="short sequence motif" description="Q motif">
    <location>
        <begin position="180"/>
        <end position="208"/>
    </location>
</feature>
<feature type="short sequence motif" description="DEAD box">
    <location>
        <begin position="347"/>
        <end position="350"/>
    </location>
</feature>
<feature type="compositionally biased region" description="Polar residues" evidence="4">
    <location>
        <begin position="21"/>
        <end position="34"/>
    </location>
</feature>
<feature type="compositionally biased region" description="Basic and acidic residues" evidence="4">
    <location>
        <begin position="44"/>
        <end position="68"/>
    </location>
</feature>
<feature type="compositionally biased region" description="Low complexity" evidence="4">
    <location>
        <begin position="70"/>
        <end position="89"/>
    </location>
</feature>
<feature type="compositionally biased region" description="Basic and acidic residues" evidence="4">
    <location>
        <begin position="94"/>
        <end position="130"/>
    </location>
</feature>
<feature type="compositionally biased region" description="Low complexity" evidence="4">
    <location>
        <begin position="604"/>
        <end position="622"/>
    </location>
</feature>
<feature type="compositionally biased region" description="Gly residues" evidence="4">
    <location>
        <begin position="623"/>
        <end position="634"/>
    </location>
</feature>
<feature type="binding site">
    <location>
        <begin position="200"/>
        <end position="207"/>
    </location>
    <ligand>
        <name>ATP</name>
        <dbReference type="ChEBI" id="CHEBI:30616"/>
    </ligand>
</feature>
<feature type="binding site">
    <location>
        <begin position="224"/>
        <end position="231"/>
    </location>
    <ligand>
        <name>ATP</name>
        <dbReference type="ChEBI" id="CHEBI:30616"/>
    </ligand>
</feature>
<feature type="modified residue" description="N-acetylserine" evidence="6 68 70">
    <location>
        <position position="2"/>
    </location>
</feature>
<feature type="modified residue" description="N6-acetyllysine" evidence="1">
    <location>
        <position position="55"/>
    </location>
</feature>
<feature type="modified residue" description="Phosphoserine" evidence="71">
    <location>
        <position position="82"/>
    </location>
</feature>
<feature type="modified residue" description="Phosphoserine" evidence="71">
    <location>
        <position position="86"/>
    </location>
</feature>
<feature type="modified residue" description="Phosphoserine" evidence="71">
    <location>
        <position position="90"/>
    </location>
</feature>
<feature type="modified residue" description="Omega-N-methylarginine" evidence="1">
    <location>
        <position position="101"/>
    </location>
</feature>
<feature type="modified residue" description="Phosphoserine; by IKKE" evidence="36">
    <location>
        <position position="102"/>
    </location>
</feature>
<feature type="modified residue" description="Phosphotyrosine" evidence="1">
    <location>
        <position position="104"/>
    </location>
</feature>
<feature type="modified residue" description="Omega-N-methylarginine" evidence="1">
    <location>
        <position position="110"/>
    </location>
</feature>
<feature type="modified residue" description="N6-acetyllysine" evidence="67">
    <location>
        <position position="118"/>
    </location>
</feature>
<feature type="modified residue" description="Phosphoserine" evidence="69">
    <location>
        <position position="131"/>
    </location>
</feature>
<feature type="modified residue" description="Phosphoserine; by TBK1; in vitro" evidence="16">
    <location>
        <position position="181"/>
    </location>
</feature>
<feature type="modified residue" description="Phosphoserine; by TBK1" evidence="16 73">
    <location>
        <position position="183"/>
    </location>
</feature>
<feature type="modified residue" description="Phosphoserine; by TBK1; in vitro" evidence="16">
    <location>
        <position position="240"/>
    </location>
</feature>
<feature type="modified residue" description="Phosphoserine; by TBK1; in vitro" evidence="16">
    <location>
        <position position="269"/>
    </location>
</feature>
<feature type="modified residue" description="Phosphoserine; by CSNK1E and TBK1; in vitro" evidence="16 48">
    <location>
        <position position="429"/>
    </location>
</feature>
<feature type="modified residue" description="Phosphothreonine; by TBK1; in vitro" evidence="16">
    <location>
        <position position="438"/>
    </location>
</feature>
<feature type="modified residue" description="Phosphoserine; by TBK1; in vitro" evidence="16">
    <location>
        <position position="442"/>
    </location>
</feature>
<feature type="modified residue" description="Phosphoserine; by TBK1; in vitro" evidence="16">
    <location>
        <position position="456"/>
    </location>
</feature>
<feature type="modified residue" description="Phosphothreonine; by CSNK1E; in vitro" evidence="48">
    <location>
        <position position="469"/>
    </location>
</feature>
<feature type="modified residue" description="Phosphoserine; by CSNK1E; in vitro" evidence="48">
    <location>
        <position position="470"/>
    </location>
</feature>
<feature type="modified residue" description="Phosphoserine; by TBK1; in vitro" evidence="16">
    <location>
        <position position="520"/>
    </location>
</feature>
<feature type="modified residue" description="Phosphothreonine; by TBK1; in vitro" evidence="16">
    <location>
        <position position="542"/>
    </location>
</feature>
<feature type="modified residue" description="Phosphoserine; by CSNK1E and TBK1; in vitro" evidence="16 48">
    <location>
        <position position="543"/>
    </location>
</feature>
<feature type="modified residue" description="Omega-N-methylarginine" evidence="72">
    <location>
        <position position="592"/>
    </location>
</feature>
<feature type="modified residue" description="Phosphoserine" evidence="71">
    <location>
        <position position="594"/>
    </location>
</feature>
<feature type="modified residue" description="Phosphoserine" evidence="71">
    <location>
        <position position="605"/>
    </location>
</feature>
<feature type="modified residue" description="Phosphoserine" evidence="66">
    <location>
        <position position="612"/>
    </location>
</feature>
<feature type="modified residue" description="Omega-N-methylarginine" evidence="72">
    <location>
        <position position="617"/>
    </location>
</feature>
<feature type="modified residue" description="Omega-N-methylarginine" evidence="72">
    <location>
        <position position="632"/>
    </location>
</feature>
<feature type="cross-link" description="Glycyl lysine isopeptide (Lys-Gly) (interchain with G-Cter in SUMO2)" evidence="74 75">
    <location>
        <position position="215"/>
    </location>
</feature>
<feature type="splice variant" id="VSP_042830" description="In isoform 2." evidence="57">
    <original>KGRYIPPHLRNREATKG</original>
    <variation>S</variation>
    <location>
        <begin position="35"/>
        <end position="51"/>
    </location>
</feature>
<feature type="sequence variant" id="VAR_075731" description="In MRXSSB; loss-of-function mutation affecting regulation of Wnt signaling." evidence="39">
    <original>I</original>
    <variation>T</variation>
    <location>
        <position position="214"/>
    </location>
</feature>
<feature type="sequence variant" id="VAR_075732" description="In MRXSSB; dbSNP:rs796052223." evidence="39">
    <original>A</original>
    <variation>V</variation>
    <location>
        <position position="233"/>
    </location>
</feature>
<feature type="sequence variant" id="VAR_075733" description="In MRXSSB." evidence="39">
    <location>
        <position position="233"/>
    </location>
</feature>
<feature type="sequence variant" id="VAR_075734" description="In MRXSSB; dbSNP:rs796052224." evidence="39">
    <original>L</original>
    <variation>P</variation>
    <location>
        <position position="235"/>
    </location>
</feature>
<feature type="sequence variant" id="VAR_035839" description="In a breast cancer sample; somatic mutation." evidence="11">
    <original>R</original>
    <variation>T</variation>
    <location>
        <position position="294"/>
    </location>
</feature>
<feature type="sequence variant" id="VAR_075735" description="In MRXSSB." evidence="39">
    <original>V</original>
    <variation>F</variation>
    <location>
        <position position="300"/>
    </location>
</feature>
<feature type="sequence variant" id="VAR_075736" description="In MRXSSB; loss-of-function mutation affecting regulation of Wnt signaling; dbSNP:rs797045025." evidence="39">
    <original>R</original>
    <variation>H</variation>
    <location>
        <position position="326"/>
    </location>
</feature>
<feature type="sequence variant" id="VAR_075737" description="In MRXSSB; dbSNP:rs1057518707." evidence="39">
    <original>R</original>
    <variation>Q</variation>
    <location>
        <position position="351"/>
    </location>
</feature>
<feature type="sequence variant" id="VAR_075738" description="In MRXSSB; dbSNP:rs797045026." evidence="39">
    <original>R</original>
    <variation>C</variation>
    <location>
        <position position="362"/>
    </location>
</feature>
<feature type="sequence variant" id="VAR_075739" description="In MRXSSB; also found as a somatic mutation in medulloblastoma; loss of ATPase activity; increased interaction with CSNK1E in the absence of dsRNA; contrary to wild-type protein, strongly interacts with CSNK1A1 and CSNK1D in vivo; strongly increased ability to activate CSNK1E kinase activity, leading to increased DVL phosphorylation, thereby activating Wnt/beta-catenin signaling; increased RNA-binding; no effect on subcellular location; dbSNP:rs796052231." evidence="39 48">
    <original>R</original>
    <variation>C</variation>
    <location>
        <position position="376"/>
    </location>
</feature>
<feature type="sequence variant" id="VAR_075740" description="In MRXSSB; dbSNP:rs796052232." evidence="39">
    <original>L</original>
    <variation>P</variation>
    <location>
        <position position="392"/>
    </location>
</feature>
<feature type="sequence variant" id="VAR_075741" description="In MRXSSB; dbSNP:rs796052233." evidence="39">
    <original>Q</original>
    <variation>P</variation>
    <location>
        <position position="417"/>
    </location>
</feature>
<feature type="sequence variant" id="VAR_075742" description="In MRXSSB; dbSNP:rs1064794574." evidence="39">
    <original>R</original>
    <variation>G</variation>
    <location>
        <position position="475"/>
    </location>
</feature>
<feature type="sequence variant" id="VAR_075743" description="In MRXSSB." evidence="39">
    <original>R</original>
    <variation>S</variation>
    <location>
        <position position="480"/>
    </location>
</feature>
<feature type="sequence variant" id="VAR_075744" description="In MRXSSB; dbSNP:rs796052235." evidence="39">
    <original>R</original>
    <variation>H</variation>
    <location>
        <position position="488"/>
    </location>
</feature>
<feature type="sequence variant" id="VAR_075745" description="In MRXSSB; loss-of-function mutation affecting regulation of Wnt signaling; dbSNP:rs797045024." evidence="39">
    <original>I</original>
    <variation>T</variation>
    <location>
        <position position="507"/>
    </location>
</feature>
<feature type="sequence variant" id="VAR_075746" description="In MRXSSB." evidence="39">
    <original>N</original>
    <variation>I</variation>
    <location>
        <position position="509"/>
    </location>
</feature>
<feature type="sequence variant" id="VAR_075747" description="In MRXSSB; dbSNP:rs796052226." evidence="39">
    <original>I</original>
    <variation>T</variation>
    <location>
        <position position="514"/>
    </location>
</feature>
<feature type="sequence variant" id="VAR_083115" description="In medulloblastoma; somatic mutation; loss of ATPase activity; interacts with CSNK1E, even in the presence of dsRNA; contrary to wild-type protein, strongly interacts with CSNK1A1 and CSNK1D in vivo; strongly increased ability to activate CSNK1E kinase activity, leading to increased DVL phosphorylation, thereby activating Wnt/beta-catenin signaling; no effect on RNA-binding, nor on subcellular location." evidence="48">
    <original>R</original>
    <variation>H</variation>
    <location>
        <position position="528"/>
    </location>
</feature>
<feature type="sequence variant" id="VAR_075748" description="In MRXSSB; loss-of-function mutation affecting regulation of Wnt signaling." evidence="39">
    <original>R</original>
    <variation>H</variation>
    <location>
        <position position="534"/>
    </location>
</feature>
<feature type="sequence variant" id="VAR_075749" description="In MRXSSB." evidence="39">
    <location>
        <position position="560"/>
    </location>
</feature>
<feature type="sequence variant" id="VAR_075750" description="In MRXSSB; dbSNP:rs1057519430." evidence="39">
    <original>P</original>
    <variation>L</variation>
    <location>
        <position position="568"/>
    </location>
</feature>
<feature type="mutagenesis site" description="Impairs nuclear export and interaction with XPO1/CMR1." evidence="54">
    <original>LDQQFAGLDL</original>
    <variation>ADQQAAGADA</variation>
    <location>
        <begin position="12"/>
        <end position="21"/>
    </location>
</feature>
<feature type="mutagenesis site" description="Impairs nuclear export and interaction with XPO1/CMR1." evidence="50">
    <original>LDL</original>
    <variation>ADA</variation>
    <location>
        <begin position="19"/>
        <end position="21"/>
    </location>
</feature>
<feature type="mutagenesis site" description="Impaired interaction with EIF4E; impaired stress granule formation, decreased repression of cap-dependent translation and decreased ability to enhance IRES-mediated translation. No effect on translation of HIV-1 RNA; when associated with A-43." evidence="14 31 34">
    <original>Y</original>
    <variation>A</variation>
    <location>
        <position position="38"/>
    </location>
</feature>
<feature type="mutagenesis site" description="Impaired interaction with EIF4E; decreased repression of cap-dependent translation. Fails to induce stress granule assembly and to rescue cell viability after stress. No effect on translation of HIV-1 RNA; when associated with A-38." evidence="14 31 34">
    <original>L</original>
    <variation>A</variation>
    <location>
        <position position="43"/>
    </location>
</feature>
<feature type="mutagenesis site" description="Partial loss of ubiquitination by RNF39." evidence="55">
    <original>K</original>
    <variation>R</variation>
    <location>
        <position position="55"/>
    </location>
</feature>
<feature type="mutagenesis site" description="Reduces total phosphorylation by 60%. No effect on interaction with IKBKE." evidence="36">
    <original>S</original>
    <variation>A</variation>
    <location>
        <position position="71"/>
    </location>
</feature>
<feature type="mutagenesis site" description="Reduces total phosphorylation by 50%. No effect on interaction with IKBKE." evidence="36">
    <original>SS</original>
    <variation>AA</variation>
    <location>
        <begin position="82"/>
        <end position="83"/>
    </location>
</feature>
<feature type="mutagenesis site" description="Loss of interaction with VACV protein K7, IRF3 activation and IFNB1 promoter induction." evidence="23">
    <original>FF</original>
    <variation>AA</variation>
    <location>
        <begin position="84"/>
        <end position="85"/>
    </location>
</feature>
<feature type="mutagenesis site" description="Reduces total phosphorylation by 30%. Abolishes interaction with IRF3 and fails to enhance IFNB promoter induction. No effect on interaction with IKBKE." evidence="36">
    <original>S</original>
    <variation>A</variation>
    <location>
        <position position="102"/>
    </location>
</feature>
<feature type="mutagenesis site" description="Interacts with IRF3 and enhances IFNB promoter induction." evidence="36">
    <original>S</original>
    <variation>D</variation>
    <location>
        <position position="102"/>
    </location>
</feature>
<feature type="mutagenesis site" description="Partial loss of ubiquitination by RNF39." evidence="55">
    <original>K</original>
    <variation>R</variation>
    <location>
        <position position="138"/>
    </location>
</feature>
<feature type="mutagenesis site" description="Loss of interaction with TRAF3, reduced TRAF3 'K-63'-linked autoubiquitination." evidence="43">
    <original>PSE</original>
    <variation>ASA</variation>
    <location>
        <begin position="142"/>
        <end position="144"/>
    </location>
</feature>
<feature type="mutagenesis site" description="Reduces total phosphorylation by 60%. No effect on interaction with IKBKE." evidence="36">
    <original>S</original>
    <variation>A</variation>
    <location>
        <position position="152"/>
    </location>
</feature>
<feature type="mutagenesis site" description="Partial loss of ubiquitination by RNF39." evidence="55">
    <original>K</original>
    <variation>R</variation>
    <location>
        <position position="162"/>
    </location>
</feature>
<feature type="mutagenesis site" description="Greatly impairs phosphorylation by TBK1 and fails to synergize with TBK1 in IFNB1 induction; when associated with A-183; A-240 and A-269." evidence="16">
    <original>S</original>
    <variation>A</variation>
    <location>
        <position position="181"/>
    </location>
</feature>
<feature type="mutagenesis site" description="Greatly impairs phosphorylation by TBK1 and fails to synergize with TBK1 in IFN-beta induction; when associated with A-181; A-240 and A-269." evidence="16">
    <original>S</original>
    <variation>A</variation>
    <location>
        <position position="183"/>
    </location>
</feature>
<feature type="mutagenesis site" description="No effect on general translation; when associated with A-207; A-230; A-347 and A-348." evidence="33">
    <original>Y</original>
    <variation>A</variation>
    <location>
        <position position="200"/>
    </location>
</feature>
<feature type="mutagenesis site" description="Does not promote the translation of HIV-1 RNA. No effect on general translation; when associated with A-200; A-230: A-347 and A-348." evidence="33 34">
    <original>Q</original>
    <variation>A</variation>
    <location>
        <position position="207"/>
    </location>
</feature>
<feature type="mutagenesis site" description="No effect on general translation; when associated with A-200; A-207; A-347 and A-348." evidence="33">
    <original>K</original>
    <variation>A</variation>
    <location>
        <position position="230"/>
    </location>
</feature>
<feature type="mutagenesis site" description="Complete loss of ATPase and RNA-unwinding activities. Loss of HIV-1 mRNA nuclear export. Does not promote the translation of HIV-1 RNA. No effect on IFNB1 induction. No effect on RNA-binding. Loss of inhibition of NF-kappa-B-mediated transcriptional activity." evidence="8 16 20 29 34 42">
    <original>K</original>
    <variation>E</variation>
    <location>
        <position position="230"/>
    </location>
</feature>
<feature type="mutagenesis site" description="Greatly impairs phosphorylation by TBK1 and fails to synergize with TBK1 in IFN-beta induction; when associated with A-181; A-183 and A-269." evidence="16">
    <original>S</original>
    <variation>A</variation>
    <location>
        <position position="240"/>
    </location>
</feature>
<feature type="mutagenesis site" description="Greatly impairs phosphorylation by TBK1 and fails to synergize with TBK1 in IFN-beta induction; when associated with A-181; A-183 and A-240." evidence="16">
    <original>S</original>
    <variation>A</variation>
    <location>
        <position position="269"/>
    </location>
</feature>
<feature type="mutagenesis site" description="Increased NF-kappa-B-mediated transcriptional activity, contrary to wild-type which is inhibitory in this experimental setting." evidence="42">
    <original>TRE</original>
    <variation>RRV</variation>
    <location>
        <begin position="275"/>
        <end position="277"/>
    </location>
</feature>
<feature type="mutagenesis site" description="Loss of ATPase activity." evidence="29">
    <original>DEAD</original>
    <variation>AEAA</variation>
    <location>
        <begin position="347"/>
        <end position="350"/>
    </location>
</feature>
<feature type="mutagenesis site" description="No effect on general translation; when associated with A-200; A-207; A-230 and A-348." evidence="33">
    <original>D</original>
    <variation>A</variation>
    <location>
        <position position="347"/>
    </location>
</feature>
<feature type="mutagenesis site" description="No effect on general translation; when associated with A-200; A-207; A-230 and A-347." evidence="33 34">
    <original>E</original>
    <variation>A</variation>
    <location>
        <position position="348"/>
    </location>
</feature>
<feature type="mutagenesis site" description="Loss of both ATPase and RNA helicase activities; decreased up-regulation of CDKN1A promoter activity and HNF4A-mediated MTTP transcriptional activation; no effect on the repression of cap- and IRES-dependent translation, WNT/beta catenin signaling, nor on stress granule assembly. Does not promote the translation of HIV-1 RNA." evidence="14 31 33 34 35">
    <original>E</original>
    <variation>Q</variation>
    <location>
        <position position="348"/>
    </location>
</feature>
<feature type="mutagenesis site" description="Loss of RNA helicase, but not ATPase activity; no effect on the repression of cap- and IRES-dependent translation, WNT/beta catenin signaling, up-regulation of CDKN1A promoter activity, HNF4A-mediated MTTP transcriptional activation, nor on stress granule assembly." evidence="14 31 35 44">
    <original>SAT</original>
    <variation>AAA</variation>
    <location>
        <begin position="382"/>
        <end position="384"/>
    </location>
</feature>
<feature type="mutagenesis site" description="Strong decrease in ATPase activity and RNA-unwinding activity. Does not promote the translation of mRNAs containing long structured 5'UTRs, including that of CCNE1. No effect on the translation of HIV-1 RNA." evidence="8 17 27 34">
    <original>S</original>
    <variation>L</variation>
    <location>
        <position position="382"/>
    </location>
</feature>
<feature type="mutagenesis site" description="Impairs phosphorylation by TBK1 and fails to synergize with TBK1 in IFN-beta induction; when associated with A-438; A-442; A-456 and A-520." evidence="16">
    <original>S</original>
    <variation>A</variation>
    <location>
        <position position="429"/>
    </location>
</feature>
<feature type="mutagenesis site" description="Impairs phosphorylation by TBK1 and fails to synergize with TBK1 in IFN-beta induction; when associated with A-429; A-442; A-456 and A-520." evidence="16">
    <original>T</original>
    <variation>A</variation>
    <location>
        <position position="438"/>
    </location>
</feature>
<feature type="mutagenesis site" description="Impairs phosphorylation by TBK1 and fails to synergize with TBK1 in IFN-beta induction; when associated with A-429; A-438; A-456 and A-520." evidence="16">
    <original>S</original>
    <variation>A</variation>
    <location>
        <position position="442"/>
    </location>
</feature>
<feature type="mutagenesis site" description="Impairs phosphorylation by TBK1 and fails to synergize with TBK1 in IFN-beta induction; when associated with A-429; A-438; A-442 and A-520." evidence="16">
    <original>S</original>
    <variation>A</variation>
    <location>
        <position position="456"/>
    </location>
</feature>
<feature type="mutagenesis site" description="Impairs phosphorylation by TBK1 and fails to synergize with TBK1 in IFN-beta induction; when associated with A-429; A-438; A-442 and A-456." evidence="16">
    <original>S</original>
    <variation>A</variation>
    <location>
        <position position="520"/>
    </location>
</feature>
<feature type="sequence conflict" description="In Ref. 3; AAC51830/AAC51829." evidence="59" ref="3">
    <original>K</original>
    <variation>R</variation>
    <location>
        <position position="50"/>
    </location>
</feature>
<feature type="strand" evidence="79">
    <location>
        <begin position="136"/>
        <end position="138"/>
    </location>
</feature>
<feature type="helix" evidence="79">
    <location>
        <begin position="144"/>
        <end position="151"/>
    </location>
</feature>
<feature type="turn" evidence="82">
    <location>
        <begin position="158"/>
        <end position="161"/>
    </location>
</feature>
<feature type="helix" evidence="82">
    <location>
        <begin position="162"/>
        <end position="165"/>
    </location>
</feature>
<feature type="strand" evidence="76">
    <location>
        <begin position="168"/>
        <end position="172"/>
    </location>
</feature>
<feature type="helix" evidence="76">
    <location>
        <begin position="182"/>
        <end position="184"/>
    </location>
</feature>
<feature type="helix" evidence="76">
    <location>
        <begin position="189"/>
        <end position="198"/>
    </location>
</feature>
<feature type="helix" evidence="76">
    <location>
        <begin position="205"/>
        <end position="215"/>
    </location>
</feature>
<feature type="strand" evidence="76">
    <location>
        <begin position="220"/>
        <end position="223"/>
    </location>
</feature>
<feature type="helix" evidence="76">
    <location>
        <begin position="230"/>
        <end position="245"/>
    </location>
</feature>
<feature type="helix" evidence="76">
    <location>
        <begin position="249"/>
        <end position="256"/>
    </location>
</feature>
<feature type="strand" evidence="78">
    <location>
        <begin position="261"/>
        <end position="263"/>
    </location>
</feature>
<feature type="strand" evidence="76">
    <location>
        <begin position="268"/>
        <end position="272"/>
    </location>
</feature>
<feature type="helix" evidence="76">
    <location>
        <begin position="276"/>
        <end position="290"/>
    </location>
</feature>
<feature type="strand" evidence="76">
    <location>
        <begin position="297"/>
        <end position="300"/>
    </location>
</feature>
<feature type="strand" evidence="76">
    <location>
        <begin position="302"/>
        <end position="304"/>
    </location>
</feature>
<feature type="helix" evidence="76">
    <location>
        <begin position="306"/>
        <end position="313"/>
    </location>
</feature>
<feature type="strand" evidence="76">
    <location>
        <begin position="318"/>
        <end position="322"/>
    </location>
</feature>
<feature type="helix" evidence="76">
    <location>
        <begin position="324"/>
        <end position="332"/>
    </location>
</feature>
<feature type="strand" evidence="76">
    <location>
        <begin position="343"/>
        <end position="348"/>
    </location>
</feature>
<feature type="helix" evidence="76">
    <location>
        <begin position="349"/>
        <end position="354"/>
    </location>
</feature>
<feature type="turn" evidence="82">
    <location>
        <begin position="355"/>
        <end position="357"/>
    </location>
</feature>
<feature type="helix" evidence="76">
    <location>
        <begin position="358"/>
        <end position="365"/>
    </location>
</feature>
<feature type="strand" evidence="76">
    <location>
        <begin position="367"/>
        <end position="369"/>
    </location>
</feature>
<feature type="strand" evidence="76">
    <location>
        <begin position="376"/>
        <end position="383"/>
    </location>
</feature>
<feature type="helix" evidence="76">
    <location>
        <begin position="387"/>
        <end position="396"/>
    </location>
</feature>
<feature type="strand" evidence="76">
    <location>
        <begin position="401"/>
        <end position="405"/>
    </location>
</feature>
<feature type="turn" evidence="80">
    <location>
        <begin position="411"/>
        <end position="414"/>
    </location>
</feature>
<feature type="strand" evidence="77">
    <location>
        <begin position="415"/>
        <end position="421"/>
    </location>
</feature>
<feature type="helix" evidence="77">
    <location>
        <begin position="424"/>
        <end position="426"/>
    </location>
</feature>
<feature type="helix" evidence="77">
    <location>
        <begin position="427"/>
        <end position="437"/>
    </location>
</feature>
<feature type="strand" evidence="77">
    <location>
        <begin position="444"/>
        <end position="449"/>
    </location>
</feature>
<feature type="helix" evidence="77">
    <location>
        <begin position="451"/>
        <end position="463"/>
    </location>
</feature>
<feature type="strand" evidence="77">
    <location>
        <begin position="468"/>
        <end position="471"/>
    </location>
</feature>
<feature type="strand" evidence="81">
    <location>
        <begin position="473"/>
        <end position="475"/>
    </location>
</feature>
<feature type="helix" evidence="77">
    <location>
        <begin position="477"/>
        <end position="480"/>
    </location>
</feature>
<feature type="helix" evidence="77">
    <location>
        <begin position="482"/>
        <end position="488"/>
    </location>
</feature>
<feature type="strand" evidence="77">
    <location>
        <begin position="491"/>
        <end position="498"/>
    </location>
</feature>
<feature type="turn" evidence="79">
    <location>
        <begin position="499"/>
        <end position="501"/>
    </location>
</feature>
<feature type="turn" evidence="77">
    <location>
        <begin position="502"/>
        <end position="504"/>
    </location>
</feature>
<feature type="strand" evidence="77">
    <location>
        <begin position="509"/>
        <end position="517"/>
    </location>
</feature>
<feature type="helix" evidence="77">
    <location>
        <begin position="522"/>
        <end position="529"/>
    </location>
</feature>
<feature type="strand" evidence="79">
    <location>
        <begin position="535"/>
        <end position="537"/>
    </location>
</feature>
<feature type="strand" evidence="77">
    <location>
        <begin position="539"/>
        <end position="545"/>
    </location>
</feature>
<feature type="helix" evidence="77">
    <location>
        <begin position="547"/>
        <end position="552"/>
    </location>
</feature>
<feature type="helix" evidence="77">
    <location>
        <begin position="553"/>
        <end position="562"/>
    </location>
</feature>
<feature type="helix" evidence="77">
    <location>
        <begin position="569"/>
        <end position="575"/>
    </location>
</feature>
<feature type="helix" evidence="80">
    <location>
        <begin position="578"/>
        <end position="580"/>
    </location>
</feature>
<dbReference type="EC" id="3.6.4.13" evidence="8 13 29 53 54"/>
<dbReference type="EMBL" id="U50553">
    <property type="protein sequence ID" value="AAB95637.1"/>
    <property type="molecule type" value="mRNA"/>
</dbReference>
<dbReference type="EMBL" id="AF061337">
    <property type="protein sequence ID" value="AAC34298.1"/>
    <property type="molecule type" value="mRNA"/>
</dbReference>
<dbReference type="EMBL" id="AF000982">
    <property type="protein sequence ID" value="AAC51829.1"/>
    <property type="molecule type" value="mRNA"/>
</dbReference>
<dbReference type="EMBL" id="AF000983">
    <property type="protein sequence ID" value="AAC51830.1"/>
    <property type="molecule type" value="mRNA"/>
</dbReference>
<dbReference type="EMBL" id="AK291153">
    <property type="protein sequence ID" value="BAF83842.1"/>
    <property type="molecule type" value="mRNA"/>
</dbReference>
<dbReference type="EMBL" id="AK304689">
    <property type="protein sequence ID" value="BAG65460.1"/>
    <property type="molecule type" value="mRNA"/>
</dbReference>
<dbReference type="EMBL" id="AL391647">
    <property type="status" value="NOT_ANNOTATED_CDS"/>
    <property type="molecule type" value="Genomic_DNA"/>
</dbReference>
<dbReference type="EMBL" id="Z93015">
    <property type="status" value="NOT_ANNOTATED_CDS"/>
    <property type="molecule type" value="Genomic_DNA"/>
</dbReference>
<dbReference type="EMBL" id="CH471141">
    <property type="protein sequence ID" value="EAW59402.1"/>
    <property type="molecule type" value="Genomic_DNA"/>
</dbReference>
<dbReference type="EMBL" id="CH471141">
    <property type="protein sequence ID" value="EAW59403.1"/>
    <property type="molecule type" value="Genomic_DNA"/>
</dbReference>
<dbReference type="EMBL" id="CH471141">
    <property type="protein sequence ID" value="EAW59404.1"/>
    <property type="molecule type" value="Genomic_DNA"/>
</dbReference>
<dbReference type="EMBL" id="CH471141">
    <property type="protein sequence ID" value="EAW59405.1"/>
    <property type="molecule type" value="Genomic_DNA"/>
</dbReference>
<dbReference type="EMBL" id="BC011819">
    <property type="protein sequence ID" value="AAH11819.1"/>
    <property type="molecule type" value="mRNA"/>
</dbReference>
<dbReference type="CCDS" id="CCDS43931.1">
    <molecule id="O00571-1"/>
</dbReference>
<dbReference type="CCDS" id="CCDS55404.1">
    <molecule id="O00571-2"/>
</dbReference>
<dbReference type="RefSeq" id="NP_001180345.1">
    <property type="nucleotide sequence ID" value="NM_001193416.2"/>
</dbReference>
<dbReference type="RefSeq" id="NP_001180346.1">
    <molecule id="O00571-2"/>
    <property type="nucleotide sequence ID" value="NM_001193417.3"/>
</dbReference>
<dbReference type="RefSeq" id="NP_001347.3">
    <molecule id="O00571-1"/>
    <property type="nucleotide sequence ID" value="NM_001356.4"/>
</dbReference>
<dbReference type="PDB" id="2I4I">
    <property type="method" value="X-ray"/>
    <property type="resolution" value="2.20 A"/>
    <property type="chains" value="A=168-582"/>
</dbReference>
<dbReference type="PDB" id="2JGN">
    <property type="method" value="X-ray"/>
    <property type="resolution" value="1.91 A"/>
    <property type="chains" value="A/B/C=409-580"/>
</dbReference>
<dbReference type="PDB" id="3JRV">
    <property type="method" value="X-ray"/>
    <property type="resolution" value="1.60 A"/>
    <property type="chains" value="C/D/E=71-90"/>
</dbReference>
<dbReference type="PDB" id="4O2C">
    <property type="method" value="X-ray"/>
    <property type="resolution" value="1.80 A"/>
    <property type="chains" value="C=2-10"/>
</dbReference>
<dbReference type="PDB" id="4O2E">
    <property type="method" value="X-ray"/>
    <property type="resolution" value="1.98 A"/>
    <property type="chains" value="C/F=2-10"/>
</dbReference>
<dbReference type="PDB" id="4O2F">
    <property type="method" value="X-ray"/>
    <property type="resolution" value="1.90 A"/>
    <property type="chains" value="C/F=3-10"/>
</dbReference>
<dbReference type="PDB" id="4PX9">
    <property type="method" value="X-ray"/>
    <property type="resolution" value="2.31 A"/>
    <property type="chains" value="A/B/C=135-407"/>
</dbReference>
<dbReference type="PDB" id="4PXA">
    <property type="method" value="X-ray"/>
    <property type="resolution" value="3.20 A"/>
    <property type="chains" value="A=135-582"/>
</dbReference>
<dbReference type="PDB" id="5E7I">
    <property type="method" value="X-ray"/>
    <property type="resolution" value="2.22 A"/>
    <property type="chains" value="A/B/C=133-584"/>
</dbReference>
<dbReference type="PDB" id="5E7J">
    <property type="method" value="X-ray"/>
    <property type="resolution" value="2.23 A"/>
    <property type="chains" value="A=133-584"/>
</dbReference>
<dbReference type="PDB" id="5E7M">
    <property type="method" value="X-ray"/>
    <property type="resolution" value="2.30 A"/>
    <property type="chains" value="A=133-584"/>
</dbReference>
<dbReference type="PDB" id="6CZ5">
    <property type="method" value="X-ray"/>
    <property type="resolution" value="3.00 A"/>
    <property type="chains" value="A=132-607"/>
</dbReference>
<dbReference type="PDB" id="6O5F">
    <property type="method" value="X-ray"/>
    <property type="resolution" value="2.50 A"/>
    <property type="chains" value="A/B=132-607"/>
</dbReference>
<dbReference type="PDB" id="7LIU">
    <property type="method" value="X-ray"/>
    <property type="resolution" value="3.00 A"/>
    <property type="chains" value="A/B=135-582"/>
</dbReference>
<dbReference type="PDB" id="8SSW">
    <property type="method" value="X-ray"/>
    <property type="resolution" value="2.40 A"/>
    <property type="chains" value="A/B=132-607"/>
</dbReference>
<dbReference type="PDBsum" id="2I4I"/>
<dbReference type="PDBsum" id="2JGN"/>
<dbReference type="PDBsum" id="3JRV"/>
<dbReference type="PDBsum" id="4O2C"/>
<dbReference type="PDBsum" id="4O2E"/>
<dbReference type="PDBsum" id="4O2F"/>
<dbReference type="PDBsum" id="4PX9"/>
<dbReference type="PDBsum" id="4PXA"/>
<dbReference type="PDBsum" id="5E7I"/>
<dbReference type="PDBsum" id="5E7J"/>
<dbReference type="PDBsum" id="5E7M"/>
<dbReference type="PDBsum" id="6CZ5"/>
<dbReference type="PDBsum" id="6O5F"/>
<dbReference type="PDBsum" id="7LIU"/>
<dbReference type="PDBsum" id="8SSW"/>
<dbReference type="SMR" id="O00571"/>
<dbReference type="BioGRID" id="108020">
    <property type="interactions" value="663"/>
</dbReference>
<dbReference type="CORUM" id="O00571"/>
<dbReference type="DIP" id="DIP-27551N"/>
<dbReference type="ELM" id="O00571"/>
<dbReference type="FunCoup" id="O00571">
    <property type="interactions" value="3532"/>
</dbReference>
<dbReference type="IntAct" id="O00571">
    <property type="interactions" value="177"/>
</dbReference>
<dbReference type="MINT" id="O00571"/>
<dbReference type="STRING" id="9606.ENSP00000494040"/>
<dbReference type="BindingDB" id="O00571"/>
<dbReference type="ChEMBL" id="CHEMBL5553"/>
<dbReference type="DrugCentral" id="O00571"/>
<dbReference type="TCDB" id="1.I.1.1.3">
    <property type="family name" value="the nuclear pore complex (npc) family"/>
</dbReference>
<dbReference type="CarbonylDB" id="O00571"/>
<dbReference type="GlyCosmos" id="O00571">
    <property type="glycosylation" value="2 sites, 1 glycan"/>
</dbReference>
<dbReference type="GlyGen" id="O00571">
    <property type="glycosylation" value="7 sites, 1 N-linked glycan (1 site), 1 O-linked glycan (6 sites)"/>
</dbReference>
<dbReference type="iPTMnet" id="O00571"/>
<dbReference type="MetOSite" id="O00571"/>
<dbReference type="PhosphoSitePlus" id="O00571"/>
<dbReference type="SwissPalm" id="O00571"/>
<dbReference type="BioMuta" id="DDX3X"/>
<dbReference type="REPRODUCTION-2DPAGE" id="IPI00215637"/>
<dbReference type="jPOST" id="O00571"/>
<dbReference type="MassIVE" id="O00571"/>
<dbReference type="PaxDb" id="9606-ENSP00000382840"/>
<dbReference type="PeptideAtlas" id="O00571"/>
<dbReference type="PRIDE" id="O00571"/>
<dbReference type="ProteomicsDB" id="47982">
    <molecule id="O00571-1"/>
</dbReference>
<dbReference type="ProteomicsDB" id="47983">
    <molecule id="O00571-2"/>
</dbReference>
<dbReference type="Pumba" id="O00571"/>
<dbReference type="Antibodypedia" id="463">
    <property type="antibodies" value="703 antibodies from 41 providers"/>
</dbReference>
<dbReference type="DNASU" id="1654"/>
<dbReference type="Ensembl" id="ENST00000457138.7">
    <molecule id="O00571-2"/>
    <property type="protein sequence ID" value="ENSP00000392494.2"/>
    <property type="gene ID" value="ENSG00000215301.11"/>
</dbReference>
<dbReference type="Ensembl" id="ENST00000478993.5">
    <molecule id="O00571-1"/>
    <property type="protein sequence ID" value="ENSP00000478443.1"/>
    <property type="gene ID" value="ENSG00000215301.11"/>
</dbReference>
<dbReference type="Ensembl" id="ENST00000629496.3">
    <molecule id="O00571-1"/>
    <property type="protein sequence ID" value="ENSP00000487224.1"/>
    <property type="gene ID" value="ENSG00000215301.11"/>
</dbReference>
<dbReference type="Ensembl" id="ENST00000629785.2">
    <molecule id="O00571-1"/>
    <property type="protein sequence ID" value="ENSP00000486516.1"/>
    <property type="gene ID" value="ENSG00000215301.11"/>
</dbReference>
<dbReference type="Ensembl" id="ENST00000630255.2">
    <molecule id="O00571-1"/>
    <property type="protein sequence ID" value="ENSP00000486720.1"/>
    <property type="gene ID" value="ENSG00000215301.11"/>
</dbReference>
<dbReference type="Ensembl" id="ENST00000644876.2">
    <molecule id="O00571-1"/>
    <property type="protein sequence ID" value="ENSP00000494040.1"/>
    <property type="gene ID" value="ENSG00000215301.11"/>
</dbReference>
<dbReference type="GeneID" id="1654"/>
<dbReference type="KEGG" id="hsa:1654"/>
<dbReference type="MANE-Select" id="ENST00000644876.2">
    <property type="protein sequence ID" value="ENSP00000494040.1"/>
    <property type="RefSeq nucleotide sequence ID" value="NM_001356.5"/>
    <property type="RefSeq protein sequence ID" value="NP_001347.3"/>
</dbReference>
<dbReference type="UCSC" id="uc004dfe.4">
    <molecule id="O00571-1"/>
    <property type="organism name" value="human"/>
</dbReference>
<dbReference type="AGR" id="HGNC:2745"/>
<dbReference type="CTD" id="1654"/>
<dbReference type="DisGeNET" id="1654"/>
<dbReference type="GeneCards" id="DDX3X"/>
<dbReference type="GeneReviews" id="DDX3X"/>
<dbReference type="HGNC" id="HGNC:2745">
    <property type="gene designation" value="DDX3X"/>
</dbReference>
<dbReference type="HPA" id="ENSG00000215301">
    <property type="expression patterns" value="Low tissue specificity"/>
</dbReference>
<dbReference type="MalaCards" id="DDX3X"/>
<dbReference type="MIM" id="300160">
    <property type="type" value="gene"/>
</dbReference>
<dbReference type="MIM" id="300958">
    <property type="type" value="phenotype"/>
</dbReference>
<dbReference type="neXtProt" id="NX_O00571"/>
<dbReference type="OpenTargets" id="ENSG00000215301"/>
<dbReference type="Orphanet" id="99861">
    <property type="disease" value="Precursor T-cell acute lymphoblastic leukemia"/>
</dbReference>
<dbReference type="Orphanet" id="3338">
    <property type="disease" value="Toriello-Carey syndrome"/>
</dbReference>
<dbReference type="Orphanet" id="457260">
    <property type="disease" value="X-linked intellectual disability-hypotonia-movement disorder syndrome"/>
</dbReference>
<dbReference type="PharmGKB" id="PA27216"/>
<dbReference type="VEuPathDB" id="HostDB:ENSG00000215301"/>
<dbReference type="eggNOG" id="KOG0335">
    <property type="taxonomic scope" value="Eukaryota"/>
</dbReference>
<dbReference type="GeneTree" id="ENSGT00940000154443"/>
<dbReference type="HOGENOM" id="CLU_003041_16_3_1"/>
<dbReference type="InParanoid" id="O00571"/>
<dbReference type="OrthoDB" id="196131at2759"/>
<dbReference type="PAN-GO" id="O00571">
    <property type="GO annotations" value="6 GO annotations based on evolutionary models"/>
</dbReference>
<dbReference type="PhylomeDB" id="O00571"/>
<dbReference type="TreeFam" id="TF300364"/>
<dbReference type="BRENDA" id="3.6.4.13">
    <property type="organism ID" value="2681"/>
</dbReference>
<dbReference type="PathwayCommons" id="O00571"/>
<dbReference type="Reactome" id="R-HSA-6798695">
    <property type="pathway name" value="Neutrophil degranulation"/>
</dbReference>
<dbReference type="SignaLink" id="O00571"/>
<dbReference type="SIGNOR" id="O00571"/>
<dbReference type="BioGRID-ORCS" id="1654">
    <property type="hits" value="225 hits in 795 CRISPR screens"/>
</dbReference>
<dbReference type="CD-CODE" id="232F8A39">
    <property type="entry name" value="P-body"/>
</dbReference>
<dbReference type="CD-CODE" id="88CBB25B">
    <property type="entry name" value="Synthetic Condensate 000222"/>
</dbReference>
<dbReference type="CD-CODE" id="91857CE7">
    <property type="entry name" value="Nucleolus"/>
</dbReference>
<dbReference type="CD-CODE" id="DEE660B4">
    <property type="entry name" value="Stress granule"/>
</dbReference>
<dbReference type="CD-CODE" id="E603CCA4">
    <property type="entry name" value="Germ granule"/>
</dbReference>
<dbReference type="CD-CODE" id="FB4E32DD">
    <property type="entry name" value="Presynaptic clusters and postsynaptic densities"/>
</dbReference>
<dbReference type="ChiTaRS" id="DDX3X">
    <property type="organism name" value="human"/>
</dbReference>
<dbReference type="EvolutionaryTrace" id="O00571"/>
<dbReference type="GeneWiki" id="DDX3X"/>
<dbReference type="GenomeRNAi" id="1654"/>
<dbReference type="Pharos" id="O00571">
    <property type="development level" value="Tchem"/>
</dbReference>
<dbReference type="PRO" id="PR:O00571"/>
<dbReference type="Proteomes" id="UP000005640">
    <property type="component" value="Chromosome X"/>
</dbReference>
<dbReference type="RNAct" id="O00571">
    <property type="molecule type" value="protein"/>
</dbReference>
<dbReference type="Bgee" id="ENSG00000215301">
    <property type="expression patterns" value="Expressed in choroid plexus epithelium and 208 other cell types or tissues"/>
</dbReference>
<dbReference type="ExpressionAtlas" id="O00571">
    <property type="expression patterns" value="baseline and differential"/>
</dbReference>
<dbReference type="GO" id="GO:0031252">
    <property type="term" value="C:cell leading edge"/>
    <property type="evidence" value="ECO:0000314"/>
    <property type="project" value="UniProtKB"/>
</dbReference>
<dbReference type="GO" id="GO:0005813">
    <property type="term" value="C:centrosome"/>
    <property type="evidence" value="ECO:0000314"/>
    <property type="project" value="UniProtKB"/>
</dbReference>
<dbReference type="GO" id="GO:0005737">
    <property type="term" value="C:cytoplasm"/>
    <property type="evidence" value="ECO:0000314"/>
    <property type="project" value="UniProtKB"/>
</dbReference>
<dbReference type="GO" id="GO:0010494">
    <property type="term" value="C:cytoplasmic stress granule"/>
    <property type="evidence" value="ECO:0000314"/>
    <property type="project" value="UniProtKB"/>
</dbReference>
<dbReference type="GO" id="GO:0005829">
    <property type="term" value="C:cytosol"/>
    <property type="evidence" value="ECO:0000314"/>
    <property type="project" value="HPA"/>
</dbReference>
<dbReference type="GO" id="GO:0070062">
    <property type="term" value="C:extracellular exosome"/>
    <property type="evidence" value="ECO:0007005"/>
    <property type="project" value="UniProtKB"/>
</dbReference>
<dbReference type="GO" id="GO:0005576">
    <property type="term" value="C:extracellular region"/>
    <property type="evidence" value="ECO:0000304"/>
    <property type="project" value="Reactome"/>
</dbReference>
<dbReference type="GO" id="GO:1904813">
    <property type="term" value="C:ficolin-1-rich granule lumen"/>
    <property type="evidence" value="ECO:0000304"/>
    <property type="project" value="Reactome"/>
</dbReference>
<dbReference type="GO" id="GO:0030027">
    <property type="term" value="C:lamellipodium"/>
    <property type="evidence" value="ECO:0007669"/>
    <property type="project" value="UniProtKB-SubCell"/>
</dbReference>
<dbReference type="GO" id="GO:0005739">
    <property type="term" value="C:mitochondrion"/>
    <property type="evidence" value="ECO:0000314"/>
    <property type="project" value="FlyBase"/>
</dbReference>
<dbReference type="GO" id="GO:0072559">
    <property type="term" value="C:NLRP3 inflammasome complex"/>
    <property type="evidence" value="ECO:0000250"/>
    <property type="project" value="UniProtKB"/>
</dbReference>
<dbReference type="GO" id="GO:0005634">
    <property type="term" value="C:nucleus"/>
    <property type="evidence" value="ECO:0000314"/>
    <property type="project" value="UniProtKB"/>
</dbReference>
<dbReference type="GO" id="GO:0043186">
    <property type="term" value="C:P granule"/>
    <property type="evidence" value="ECO:0000318"/>
    <property type="project" value="GO_Central"/>
</dbReference>
<dbReference type="GO" id="GO:0005886">
    <property type="term" value="C:plasma membrane"/>
    <property type="evidence" value="ECO:0000314"/>
    <property type="project" value="UniProtKB"/>
</dbReference>
<dbReference type="GO" id="GO:0034774">
    <property type="term" value="C:secretory granule lumen"/>
    <property type="evidence" value="ECO:0000304"/>
    <property type="project" value="Reactome"/>
</dbReference>
<dbReference type="GO" id="GO:0005524">
    <property type="term" value="F:ATP binding"/>
    <property type="evidence" value="ECO:0007669"/>
    <property type="project" value="UniProtKB-KW"/>
</dbReference>
<dbReference type="GO" id="GO:0016887">
    <property type="term" value="F:ATP hydrolysis activity"/>
    <property type="evidence" value="ECO:0000314"/>
    <property type="project" value="UniProtKB"/>
</dbReference>
<dbReference type="GO" id="GO:0045296">
    <property type="term" value="F:cadherin binding"/>
    <property type="evidence" value="ECO:0007005"/>
    <property type="project" value="BHF-UCL"/>
</dbReference>
<dbReference type="GO" id="GO:0043273">
    <property type="term" value="F:CTPase activity"/>
    <property type="evidence" value="ECO:0000314"/>
    <property type="project" value="AgBase"/>
</dbReference>
<dbReference type="GO" id="GO:0003677">
    <property type="term" value="F:DNA binding"/>
    <property type="evidence" value="ECO:0000314"/>
    <property type="project" value="UniProtKB"/>
</dbReference>
<dbReference type="GO" id="GO:0003678">
    <property type="term" value="F:DNA helicase activity"/>
    <property type="evidence" value="ECO:0000314"/>
    <property type="project" value="UniProtKB"/>
</dbReference>
<dbReference type="GO" id="GO:0008190">
    <property type="term" value="F:eukaryotic initiation factor 4E binding"/>
    <property type="evidence" value="ECO:0000314"/>
    <property type="project" value="UniProtKB"/>
</dbReference>
<dbReference type="GO" id="GO:0043015">
    <property type="term" value="F:gamma-tubulin binding"/>
    <property type="evidence" value="ECO:0000314"/>
    <property type="project" value="UniProtKB"/>
</dbReference>
<dbReference type="GO" id="GO:0003924">
    <property type="term" value="F:GTPase activity"/>
    <property type="evidence" value="ECO:0000314"/>
    <property type="project" value="AgBase"/>
</dbReference>
<dbReference type="GO" id="GO:0048027">
    <property type="term" value="F:mRNA 5'-UTR binding"/>
    <property type="evidence" value="ECO:0000314"/>
    <property type="project" value="UniProtKB"/>
</dbReference>
<dbReference type="GO" id="GO:0003729">
    <property type="term" value="F:mRNA binding"/>
    <property type="evidence" value="ECO:0000314"/>
    <property type="project" value="UniProtKB"/>
</dbReference>
<dbReference type="GO" id="GO:0008143">
    <property type="term" value="F:poly(A) binding"/>
    <property type="evidence" value="ECO:0000314"/>
    <property type="project" value="UniProtKB"/>
</dbReference>
<dbReference type="GO" id="GO:0043539">
    <property type="term" value="F:protein serine/threonine kinase activator activity"/>
    <property type="evidence" value="ECO:0000314"/>
    <property type="project" value="UniProtKB"/>
</dbReference>
<dbReference type="GO" id="GO:0017111">
    <property type="term" value="F:ribonucleoside triphosphate phosphatase activity"/>
    <property type="evidence" value="ECO:0000314"/>
    <property type="project" value="AgBase"/>
</dbReference>
<dbReference type="GO" id="GO:0043024">
    <property type="term" value="F:ribosomal small subunit binding"/>
    <property type="evidence" value="ECO:0000314"/>
    <property type="project" value="UniProtKB"/>
</dbReference>
<dbReference type="GO" id="GO:0003723">
    <property type="term" value="F:RNA binding"/>
    <property type="evidence" value="ECO:0000314"/>
    <property type="project" value="UniProtKB"/>
</dbReference>
<dbReference type="GO" id="GO:0003724">
    <property type="term" value="F:RNA helicase activity"/>
    <property type="evidence" value="ECO:0000314"/>
    <property type="project" value="UniProtKB"/>
</dbReference>
<dbReference type="GO" id="GO:0035613">
    <property type="term" value="F:RNA stem-loop binding"/>
    <property type="evidence" value="ECO:0000314"/>
    <property type="project" value="UniProtKB"/>
</dbReference>
<dbReference type="GO" id="GO:0033592">
    <property type="term" value="F:RNA strand annealing activity"/>
    <property type="evidence" value="ECO:0000314"/>
    <property type="project" value="UniProtKB"/>
</dbReference>
<dbReference type="GO" id="GO:0035591">
    <property type="term" value="F:signaling adaptor activity"/>
    <property type="evidence" value="ECO:0000314"/>
    <property type="project" value="UniProt"/>
</dbReference>
<dbReference type="GO" id="GO:0008134">
    <property type="term" value="F:transcription factor binding"/>
    <property type="evidence" value="ECO:0000314"/>
    <property type="project" value="UniProtKB"/>
</dbReference>
<dbReference type="GO" id="GO:0031369">
    <property type="term" value="F:translation initiation factor binding"/>
    <property type="evidence" value="ECO:0000314"/>
    <property type="project" value="UniProtKB"/>
</dbReference>
<dbReference type="GO" id="GO:0030154">
    <property type="term" value="P:cell differentiation"/>
    <property type="evidence" value="ECO:0000318"/>
    <property type="project" value="GO_Central"/>
</dbReference>
<dbReference type="GO" id="GO:0071243">
    <property type="term" value="P:cellular response to arsenic-containing substance"/>
    <property type="evidence" value="ECO:0000314"/>
    <property type="project" value="UniProtKB"/>
</dbReference>
<dbReference type="GO" id="GO:0071470">
    <property type="term" value="P:cellular response to osmotic stress"/>
    <property type="evidence" value="ECO:0000314"/>
    <property type="project" value="UniProtKB"/>
</dbReference>
<dbReference type="GO" id="GO:0098586">
    <property type="term" value="P:cellular response to virus"/>
    <property type="evidence" value="ECO:0000314"/>
    <property type="project" value="UniProtKB"/>
</dbReference>
<dbReference type="GO" id="GO:0007059">
    <property type="term" value="P:chromosome segregation"/>
    <property type="evidence" value="ECO:0000315"/>
    <property type="project" value="UniProtKB"/>
</dbReference>
<dbReference type="GO" id="GO:0002753">
    <property type="term" value="P:cytoplasmic pattern recognition receptor signaling pathway"/>
    <property type="evidence" value="ECO:0000314"/>
    <property type="project" value="UniProt"/>
</dbReference>
<dbReference type="GO" id="GO:0042256">
    <property type="term" value="P:cytosolic ribosome assembly"/>
    <property type="evidence" value="ECO:0000315"/>
    <property type="project" value="UniProtKB"/>
</dbReference>
<dbReference type="GO" id="GO:0008625">
    <property type="term" value="P:extrinsic apoptotic signaling pathway via death domain receptors"/>
    <property type="evidence" value="ECO:0000315"/>
    <property type="project" value="UniProtKB"/>
</dbReference>
<dbReference type="GO" id="GO:0007276">
    <property type="term" value="P:gamete generation"/>
    <property type="evidence" value="ECO:0000318"/>
    <property type="project" value="GO_Central"/>
</dbReference>
<dbReference type="GO" id="GO:0045087">
    <property type="term" value="P:innate immune response"/>
    <property type="evidence" value="ECO:0000315"/>
    <property type="project" value="UniProtKB"/>
</dbReference>
<dbReference type="GO" id="GO:0035556">
    <property type="term" value="P:intracellular signal transduction"/>
    <property type="evidence" value="ECO:0000314"/>
    <property type="project" value="UniProtKB"/>
</dbReference>
<dbReference type="GO" id="GO:0097193">
    <property type="term" value="P:intrinsic apoptotic signaling pathway"/>
    <property type="evidence" value="ECO:0000315"/>
    <property type="project" value="UniProtKB"/>
</dbReference>
<dbReference type="GO" id="GO:0055088">
    <property type="term" value="P:lipid homeostasis"/>
    <property type="evidence" value="ECO:0000315"/>
    <property type="project" value="UniProtKB"/>
</dbReference>
<dbReference type="GO" id="GO:0043066">
    <property type="term" value="P:negative regulation of apoptotic process"/>
    <property type="evidence" value="ECO:0000315"/>
    <property type="project" value="UniProtKB"/>
</dbReference>
<dbReference type="GO" id="GO:0030308">
    <property type="term" value="P:negative regulation of cell growth"/>
    <property type="evidence" value="ECO:0000314"/>
    <property type="project" value="UniProtKB"/>
</dbReference>
<dbReference type="GO" id="GO:1902042">
    <property type="term" value="P:negative regulation of extrinsic apoptotic signaling pathway via death domain receptors"/>
    <property type="evidence" value="ECO:0000315"/>
    <property type="project" value="UniProtKB"/>
</dbReference>
<dbReference type="GO" id="GO:0010629">
    <property type="term" value="P:negative regulation of gene expression"/>
    <property type="evidence" value="ECO:0000318"/>
    <property type="project" value="GO_Central"/>
</dbReference>
<dbReference type="GO" id="GO:2001243">
    <property type="term" value="P:negative regulation of intrinsic apoptotic signaling pathway"/>
    <property type="evidence" value="ECO:0000315"/>
    <property type="project" value="UniProtKB"/>
</dbReference>
<dbReference type="GO" id="GO:1901223">
    <property type="term" value="P:negative regulation of non-canonical NF-kappaB signal transduction"/>
    <property type="evidence" value="ECO:0000315"/>
    <property type="project" value="UniProtKB"/>
</dbReference>
<dbReference type="GO" id="GO:0031333">
    <property type="term" value="P:negative regulation of protein-containing complex assembly"/>
    <property type="evidence" value="ECO:0000314"/>
    <property type="project" value="UniProtKB"/>
</dbReference>
<dbReference type="GO" id="GO:0017148">
    <property type="term" value="P:negative regulation of translation"/>
    <property type="evidence" value="ECO:0000315"/>
    <property type="project" value="UniProtKB"/>
</dbReference>
<dbReference type="GO" id="GO:0043065">
    <property type="term" value="P:positive regulation of apoptotic process"/>
    <property type="evidence" value="ECO:0000315"/>
    <property type="project" value="UniProtKB"/>
</dbReference>
<dbReference type="GO" id="GO:0090263">
    <property type="term" value="P:positive regulation of canonical Wnt signaling pathway"/>
    <property type="evidence" value="ECO:0000315"/>
    <property type="project" value="UniProtKB"/>
</dbReference>
<dbReference type="GO" id="GO:0030307">
    <property type="term" value="P:positive regulation of cell growth"/>
    <property type="evidence" value="ECO:0000315"/>
    <property type="project" value="UniProtKB"/>
</dbReference>
<dbReference type="GO" id="GO:0071651">
    <property type="term" value="P:positive regulation of chemokine (C-C motif) ligand 5 production"/>
    <property type="evidence" value="ECO:0000304"/>
    <property type="project" value="UniProtKB"/>
</dbReference>
<dbReference type="GO" id="GO:1900087">
    <property type="term" value="P:positive regulation of G1/S transition of mitotic cell cycle"/>
    <property type="evidence" value="ECO:0000315"/>
    <property type="project" value="UniProtKB"/>
</dbReference>
<dbReference type="GO" id="GO:0010628">
    <property type="term" value="P:positive regulation of gene expression"/>
    <property type="evidence" value="ECO:0000314"/>
    <property type="project" value="AgBase"/>
</dbReference>
<dbReference type="GO" id="GO:0032727">
    <property type="term" value="P:positive regulation of interferon-alpha production"/>
    <property type="evidence" value="ECO:0000314"/>
    <property type="project" value="UniProtKB"/>
</dbReference>
<dbReference type="GO" id="GO:0032728">
    <property type="term" value="P:positive regulation of interferon-beta production"/>
    <property type="evidence" value="ECO:0000314"/>
    <property type="project" value="UniProtKB"/>
</dbReference>
<dbReference type="GO" id="GO:0070131">
    <property type="term" value="P:positive regulation of mitochondrial translation"/>
    <property type="evidence" value="ECO:0000315"/>
    <property type="project" value="FlyBase"/>
</dbReference>
<dbReference type="GO" id="GO:1900227">
    <property type="term" value="P:positive regulation of NLRP3 inflammasome complex assembly"/>
    <property type="evidence" value="ECO:0000250"/>
    <property type="project" value="UniProtKB"/>
</dbReference>
<dbReference type="GO" id="GO:1901224">
    <property type="term" value="P:positive regulation of non-canonical NF-kappaB signal transduction"/>
    <property type="evidence" value="ECO:0000315"/>
    <property type="project" value="UniProtKB"/>
</dbReference>
<dbReference type="GO" id="GO:1902523">
    <property type="term" value="P:positive regulation of protein K63-linked ubiquitination"/>
    <property type="evidence" value="ECO:0000314"/>
    <property type="project" value="UniProtKB"/>
</dbReference>
<dbReference type="GO" id="GO:0034157">
    <property type="term" value="P:positive regulation of toll-like receptor 7 signaling pathway"/>
    <property type="evidence" value="ECO:0000314"/>
    <property type="project" value="UniProtKB"/>
</dbReference>
<dbReference type="GO" id="GO:0034161">
    <property type="term" value="P:positive regulation of toll-like receptor 8 signaling pathway"/>
    <property type="evidence" value="ECO:0000314"/>
    <property type="project" value="UniProtKB"/>
</dbReference>
<dbReference type="GO" id="GO:0045944">
    <property type="term" value="P:positive regulation of transcription by RNA polymerase II"/>
    <property type="evidence" value="ECO:0000314"/>
    <property type="project" value="UniProtKB"/>
</dbReference>
<dbReference type="GO" id="GO:0045727">
    <property type="term" value="P:positive regulation of translation"/>
    <property type="evidence" value="ECO:0000314"/>
    <property type="project" value="UniProtKB"/>
</dbReference>
<dbReference type="GO" id="GO:0036493">
    <property type="term" value="P:positive regulation of translation in response to endoplasmic reticulum stress"/>
    <property type="evidence" value="ECO:0000315"/>
    <property type="project" value="UniProtKB"/>
</dbReference>
<dbReference type="GO" id="GO:0045948">
    <property type="term" value="P:positive regulation of translational initiation"/>
    <property type="evidence" value="ECO:0000315"/>
    <property type="project" value="UniProtKB"/>
</dbReference>
<dbReference type="GO" id="GO:0032481">
    <property type="term" value="P:positive regulation of type I interferon production"/>
    <property type="evidence" value="ECO:0000314"/>
    <property type="project" value="UniProt"/>
</dbReference>
<dbReference type="GO" id="GO:0045070">
    <property type="term" value="P:positive regulation of viral genome replication"/>
    <property type="evidence" value="ECO:0000315"/>
    <property type="project" value="AgBase"/>
</dbReference>
<dbReference type="GO" id="GO:1903608">
    <property type="term" value="P:protein localization to cytoplasmic stress granule"/>
    <property type="evidence" value="ECO:0000315"/>
    <property type="project" value="AgBase"/>
</dbReference>
<dbReference type="GO" id="GO:0009615">
    <property type="term" value="P:response to virus"/>
    <property type="evidence" value="ECO:0000314"/>
    <property type="project" value="UniProtKB"/>
</dbReference>
<dbReference type="GO" id="GO:0034063">
    <property type="term" value="P:stress granule assembly"/>
    <property type="evidence" value="ECO:0000314"/>
    <property type="project" value="UniProtKB"/>
</dbReference>
<dbReference type="GO" id="GO:0006413">
    <property type="term" value="P:translational initiation"/>
    <property type="evidence" value="ECO:0000315"/>
    <property type="project" value="UniProtKB"/>
</dbReference>
<dbReference type="GO" id="GO:0016055">
    <property type="term" value="P:Wnt signaling pathway"/>
    <property type="evidence" value="ECO:0000315"/>
    <property type="project" value="UniProtKB"/>
</dbReference>
<dbReference type="CDD" id="cd18051">
    <property type="entry name" value="DEADc_DDX3"/>
    <property type="match status" value="1"/>
</dbReference>
<dbReference type="CDD" id="cd18787">
    <property type="entry name" value="SF2_C_DEAD"/>
    <property type="match status" value="1"/>
</dbReference>
<dbReference type="DisProt" id="DP02192"/>
<dbReference type="FunFam" id="3.40.50.300:FF:000160">
    <property type="entry name" value="ATP-dependent RNA helicase DDX3X"/>
    <property type="match status" value="1"/>
</dbReference>
<dbReference type="FunFam" id="3.40.50.300:FF:000008">
    <property type="entry name" value="ATP-dependent RNA helicase RhlB"/>
    <property type="match status" value="1"/>
</dbReference>
<dbReference type="Gene3D" id="3.40.50.300">
    <property type="entry name" value="P-loop containing nucleotide triphosphate hydrolases"/>
    <property type="match status" value="2"/>
</dbReference>
<dbReference type="IDEAL" id="IID00232"/>
<dbReference type="InterPro" id="IPR011545">
    <property type="entry name" value="DEAD/DEAH_box_helicase_dom"/>
</dbReference>
<dbReference type="InterPro" id="IPR014001">
    <property type="entry name" value="Helicase_ATP-bd"/>
</dbReference>
<dbReference type="InterPro" id="IPR001650">
    <property type="entry name" value="Helicase_C-like"/>
</dbReference>
<dbReference type="InterPro" id="IPR027417">
    <property type="entry name" value="P-loop_NTPase"/>
</dbReference>
<dbReference type="InterPro" id="IPR000629">
    <property type="entry name" value="RNA-helicase_DEAD-box_CS"/>
</dbReference>
<dbReference type="InterPro" id="IPR014014">
    <property type="entry name" value="RNA_helicase_DEAD_Q_motif"/>
</dbReference>
<dbReference type="PANTHER" id="PTHR47958">
    <property type="entry name" value="ATP-DEPENDENT RNA HELICASE DBP3"/>
    <property type="match status" value="1"/>
</dbReference>
<dbReference type="Pfam" id="PF00270">
    <property type="entry name" value="DEAD"/>
    <property type="match status" value="1"/>
</dbReference>
<dbReference type="Pfam" id="PF00271">
    <property type="entry name" value="Helicase_C"/>
    <property type="match status" value="1"/>
</dbReference>
<dbReference type="SMART" id="SM00487">
    <property type="entry name" value="DEXDc"/>
    <property type="match status" value="1"/>
</dbReference>
<dbReference type="SMART" id="SM00490">
    <property type="entry name" value="HELICc"/>
    <property type="match status" value="1"/>
</dbReference>
<dbReference type="SUPFAM" id="SSF52540">
    <property type="entry name" value="P-loop containing nucleoside triphosphate hydrolases"/>
    <property type="match status" value="1"/>
</dbReference>
<dbReference type="PROSITE" id="PS00039">
    <property type="entry name" value="DEAD_ATP_HELICASE"/>
    <property type="match status" value="1"/>
</dbReference>
<dbReference type="PROSITE" id="PS51192">
    <property type="entry name" value="HELICASE_ATP_BIND_1"/>
    <property type="match status" value="1"/>
</dbReference>
<dbReference type="PROSITE" id="PS51194">
    <property type="entry name" value="HELICASE_CTER"/>
    <property type="match status" value="1"/>
</dbReference>
<dbReference type="PROSITE" id="PS51195">
    <property type="entry name" value="Q_MOTIF"/>
    <property type="match status" value="1"/>
</dbReference>
<keyword id="KW-0002">3D-structure</keyword>
<keyword id="KW-0007">Acetylation</keyword>
<keyword id="KW-0025">Alternative splicing</keyword>
<keyword id="KW-0053">Apoptosis</keyword>
<keyword id="KW-0067">ATP-binding</keyword>
<keyword id="KW-1003">Cell membrane</keyword>
<keyword id="KW-0966">Cell projection</keyword>
<keyword id="KW-0159">Chromosome partition</keyword>
<keyword id="KW-0963">Cytoplasm</keyword>
<keyword id="KW-0206">Cytoskeleton</keyword>
<keyword id="KW-0903">Direct protein sequencing</keyword>
<keyword id="KW-0225">Disease variant</keyword>
<keyword id="KW-0238">DNA-binding</keyword>
<keyword id="KW-0347">Helicase</keyword>
<keyword id="KW-0945">Host-virus interaction</keyword>
<keyword id="KW-0378">Hydrolase</keyword>
<keyword id="KW-0391">Immunity</keyword>
<keyword id="KW-1271">Inflammasome</keyword>
<keyword id="KW-0399">Innate immunity</keyword>
<keyword id="KW-0991">Intellectual disability</keyword>
<keyword id="KW-1017">Isopeptide bond</keyword>
<keyword id="KW-0472">Membrane</keyword>
<keyword id="KW-0488">Methylation</keyword>
<keyword id="KW-0547">Nucleotide-binding</keyword>
<keyword id="KW-0539">Nucleus</keyword>
<keyword id="KW-0597">Phosphoprotein</keyword>
<keyword id="KW-1267">Proteomics identification</keyword>
<keyword id="KW-1185">Reference proteome</keyword>
<keyword id="KW-0690">Ribosome biogenesis</keyword>
<keyword id="KW-0694">RNA-binding</keyword>
<keyword id="KW-0804">Transcription</keyword>
<keyword id="KW-0805">Transcription regulation</keyword>
<keyword id="KW-0810">Translation regulation</keyword>
<keyword id="KW-0832">Ubl conjugation</keyword>
<evidence type="ECO:0000250" key="1">
    <source>
        <dbReference type="UniProtKB" id="Q62167"/>
    </source>
</evidence>
<evidence type="ECO:0000255" key="2">
    <source>
        <dbReference type="PROSITE-ProRule" id="PRU00541"/>
    </source>
</evidence>
<evidence type="ECO:0000255" key="3">
    <source>
        <dbReference type="PROSITE-ProRule" id="PRU00542"/>
    </source>
</evidence>
<evidence type="ECO:0000256" key="4">
    <source>
        <dbReference type="SAM" id="MobiDB-lite"/>
    </source>
</evidence>
<evidence type="ECO:0000269" key="5">
    <source>
    </source>
</evidence>
<evidence type="ECO:0000269" key="6">
    <source>
    </source>
</evidence>
<evidence type="ECO:0000269" key="7">
    <source>
    </source>
</evidence>
<evidence type="ECO:0000269" key="8">
    <source>
    </source>
</evidence>
<evidence type="ECO:0000269" key="9">
    <source>
    </source>
</evidence>
<evidence type="ECO:0000269" key="10">
    <source>
    </source>
</evidence>
<evidence type="ECO:0000269" key="11">
    <source>
    </source>
</evidence>
<evidence type="ECO:0000269" key="12">
    <source>
    </source>
</evidence>
<evidence type="ECO:0000269" key="13">
    <source>
    </source>
</evidence>
<evidence type="ECO:0000269" key="14">
    <source>
    </source>
</evidence>
<evidence type="ECO:0000269" key="15">
    <source>
    </source>
</evidence>
<evidence type="ECO:0000269" key="16">
    <source>
    </source>
</evidence>
<evidence type="ECO:0000269" key="17">
    <source>
    </source>
</evidence>
<evidence type="ECO:0000269" key="18">
    <source>
    </source>
</evidence>
<evidence type="ECO:0000269" key="19">
    <source>
    </source>
</evidence>
<evidence type="ECO:0000269" key="20">
    <source>
    </source>
</evidence>
<evidence type="ECO:0000269" key="21">
    <source>
    </source>
</evidence>
<evidence type="ECO:0000269" key="22">
    <source>
    </source>
</evidence>
<evidence type="ECO:0000269" key="23">
    <source>
    </source>
</evidence>
<evidence type="ECO:0000269" key="24">
    <source>
    </source>
</evidence>
<evidence type="ECO:0000269" key="25">
    <source>
    </source>
</evidence>
<evidence type="ECO:0000269" key="26">
    <source>
    </source>
</evidence>
<evidence type="ECO:0000269" key="27">
    <source>
    </source>
</evidence>
<evidence type="ECO:0000269" key="28">
    <source>
    </source>
</evidence>
<evidence type="ECO:0000269" key="29">
    <source>
    </source>
</evidence>
<evidence type="ECO:0000269" key="30">
    <source>
    </source>
</evidence>
<evidence type="ECO:0000269" key="31">
    <source>
    </source>
</evidence>
<evidence type="ECO:0000269" key="32">
    <source>
    </source>
</evidence>
<evidence type="ECO:0000269" key="33">
    <source>
    </source>
</evidence>
<evidence type="ECO:0000269" key="34">
    <source>
    </source>
</evidence>
<evidence type="ECO:0000269" key="35">
    <source>
    </source>
</evidence>
<evidence type="ECO:0000269" key="36">
    <source>
    </source>
</evidence>
<evidence type="ECO:0000269" key="37">
    <source>
    </source>
</evidence>
<evidence type="ECO:0000269" key="38">
    <source>
    </source>
</evidence>
<evidence type="ECO:0000269" key="39">
    <source>
    </source>
</evidence>
<evidence type="ECO:0000269" key="40">
    <source>
    </source>
</evidence>
<evidence type="ECO:0000269" key="41">
    <source>
    </source>
</evidence>
<evidence type="ECO:0000269" key="42">
    <source>
    </source>
</evidence>
<evidence type="ECO:0000269" key="43">
    <source>
    </source>
</evidence>
<evidence type="ECO:0000269" key="44">
    <source>
    </source>
</evidence>
<evidence type="ECO:0000269" key="45">
    <source>
    </source>
</evidence>
<evidence type="ECO:0000269" key="46">
    <source>
    </source>
</evidence>
<evidence type="ECO:0000269" key="47">
    <source>
    </source>
</evidence>
<evidence type="ECO:0000269" key="48">
    <source>
    </source>
</evidence>
<evidence type="ECO:0000269" key="49">
    <source>
    </source>
</evidence>
<evidence type="ECO:0000269" key="50">
    <source>
    </source>
</evidence>
<evidence type="ECO:0000269" key="51">
    <source>
    </source>
</evidence>
<evidence type="ECO:0000269" key="52">
    <source>
    </source>
</evidence>
<evidence type="ECO:0000269" key="53">
    <source>
    </source>
</evidence>
<evidence type="ECO:0000269" key="54">
    <source>
    </source>
</evidence>
<evidence type="ECO:0000269" key="55">
    <source>
    </source>
</evidence>
<evidence type="ECO:0000269" key="56">
    <source>
    </source>
</evidence>
<evidence type="ECO:0000303" key="57">
    <source>
    </source>
</evidence>
<evidence type="ECO:0000303" key="58">
    <source>
    </source>
</evidence>
<evidence type="ECO:0000305" key="59"/>
<evidence type="ECO:0000305" key="60">
    <source>
    </source>
</evidence>
<evidence type="ECO:0000305" key="61">
    <source>
    </source>
</evidence>
<evidence type="ECO:0000305" key="62">
    <source>
    </source>
</evidence>
<evidence type="ECO:0000305" key="63">
    <source>
    </source>
</evidence>
<evidence type="ECO:0000305" key="64">
    <source>
    </source>
</evidence>
<evidence type="ECO:0007744" key="65">
    <source>
        <dbReference type="PDB" id="6O5F"/>
    </source>
</evidence>
<evidence type="ECO:0007744" key="66">
    <source>
    </source>
</evidence>
<evidence type="ECO:0007744" key="67">
    <source>
    </source>
</evidence>
<evidence type="ECO:0007744" key="68">
    <source>
    </source>
</evidence>
<evidence type="ECO:0007744" key="69">
    <source>
    </source>
</evidence>
<evidence type="ECO:0007744" key="70">
    <source>
    </source>
</evidence>
<evidence type="ECO:0007744" key="71">
    <source>
    </source>
</evidence>
<evidence type="ECO:0007744" key="72">
    <source>
    </source>
</evidence>
<evidence type="ECO:0007744" key="73">
    <source>
    </source>
</evidence>
<evidence type="ECO:0007744" key="74">
    <source>
    </source>
</evidence>
<evidence type="ECO:0007744" key="75">
    <source>
    </source>
</evidence>
<evidence type="ECO:0007829" key="76">
    <source>
        <dbReference type="PDB" id="2I4I"/>
    </source>
</evidence>
<evidence type="ECO:0007829" key="77">
    <source>
        <dbReference type="PDB" id="2JGN"/>
    </source>
</evidence>
<evidence type="ECO:0007829" key="78">
    <source>
        <dbReference type="PDB" id="4PXA"/>
    </source>
</evidence>
<evidence type="ECO:0007829" key="79">
    <source>
        <dbReference type="PDB" id="5E7I"/>
    </source>
</evidence>
<evidence type="ECO:0007829" key="80">
    <source>
        <dbReference type="PDB" id="5E7J"/>
    </source>
</evidence>
<evidence type="ECO:0007829" key="81">
    <source>
        <dbReference type="PDB" id="5E7M"/>
    </source>
</evidence>
<evidence type="ECO:0007829" key="82">
    <source>
        <dbReference type="PDB" id="7LIU"/>
    </source>
</evidence>